<organism>
    <name type="scientific">Homo sapiens</name>
    <name type="common">Human</name>
    <dbReference type="NCBI Taxonomy" id="9606"/>
    <lineage>
        <taxon>Eukaryota</taxon>
        <taxon>Metazoa</taxon>
        <taxon>Chordata</taxon>
        <taxon>Craniata</taxon>
        <taxon>Vertebrata</taxon>
        <taxon>Euteleostomi</taxon>
        <taxon>Mammalia</taxon>
        <taxon>Eutheria</taxon>
        <taxon>Euarchontoglires</taxon>
        <taxon>Primates</taxon>
        <taxon>Haplorrhini</taxon>
        <taxon>Catarrhini</taxon>
        <taxon>Hominidae</taxon>
        <taxon>Homo</taxon>
    </lineage>
</organism>
<evidence type="ECO:0000250" key="1">
    <source>
        <dbReference type="UniProtKB" id="Q8VDM4"/>
    </source>
</evidence>
<evidence type="ECO:0000256" key="2">
    <source>
        <dbReference type="SAM" id="MobiDB-lite"/>
    </source>
</evidence>
<evidence type="ECO:0000269" key="3">
    <source>
    </source>
</evidence>
<evidence type="ECO:0000269" key="4">
    <source>
    </source>
</evidence>
<evidence type="ECO:0000269" key="5">
    <source>
    </source>
</evidence>
<evidence type="ECO:0000269" key="6">
    <source>
    </source>
</evidence>
<evidence type="ECO:0000269" key="7">
    <source>
    </source>
</evidence>
<evidence type="ECO:0000269" key="8">
    <source>
    </source>
</evidence>
<evidence type="ECO:0000269" key="9">
    <source ref="2"/>
</evidence>
<evidence type="ECO:0000303" key="10">
    <source>
    </source>
</evidence>
<evidence type="ECO:0000305" key="11"/>
<evidence type="ECO:0007744" key="12">
    <source>
    </source>
</evidence>
<evidence type="ECO:0007744" key="13">
    <source>
    </source>
</evidence>
<evidence type="ECO:0007744" key="14">
    <source>
    </source>
</evidence>
<evidence type="ECO:0007744" key="15">
    <source>
    </source>
</evidence>
<evidence type="ECO:0007744" key="16">
    <source>
    </source>
</evidence>
<evidence type="ECO:0007744" key="17">
    <source>
    </source>
</evidence>
<evidence type="ECO:0007744" key="18">
    <source>
    </source>
</evidence>
<evidence type="ECO:0007744" key="19">
    <source>
    </source>
</evidence>
<evidence type="ECO:0007744" key="20">
    <source>
    </source>
</evidence>
<evidence type="ECO:0007744" key="21">
    <source>
    </source>
</evidence>
<evidence type="ECO:0007829" key="22">
    <source>
        <dbReference type="PDB" id="7UIH"/>
    </source>
</evidence>
<evidence type="ECO:0007829" key="23">
    <source>
        <dbReference type="PDB" id="7UJD"/>
    </source>
</evidence>
<evidence type="ECO:0007829" key="24">
    <source>
        <dbReference type="PDB" id="9E8J"/>
    </source>
</evidence>
<accession>Q13200</accession>
<accession>B4DX07</accession>
<accession>B4DXY1</accession>
<accession>E7EW34</accession>
<accession>E9PCS3</accession>
<accession>Q12932</accession>
<accession>Q15321</accession>
<accession>Q53XQ4</accession>
<accession>Q96I12</accession>
<name>PSMD2_HUMAN</name>
<dbReference type="EMBL" id="D78151">
    <property type="protein sequence ID" value="BAA11226.1"/>
    <property type="molecule type" value="mRNA"/>
</dbReference>
<dbReference type="EMBL" id="BT009736">
    <property type="protein sequence ID" value="AAP88738.1"/>
    <property type="molecule type" value="mRNA"/>
</dbReference>
<dbReference type="EMBL" id="AK301759">
    <property type="protein sequence ID" value="BAG63219.1"/>
    <property type="molecule type" value="mRNA"/>
</dbReference>
<dbReference type="EMBL" id="AK302177">
    <property type="protein sequence ID" value="BAG63543.1"/>
    <property type="molecule type" value="mRNA"/>
</dbReference>
<dbReference type="EMBL" id="AC078797">
    <property type="status" value="NOT_ANNOTATED_CDS"/>
    <property type="molecule type" value="Genomic_DNA"/>
</dbReference>
<dbReference type="EMBL" id="BC002368">
    <property type="protein sequence ID" value="AAH02368.1"/>
    <property type="molecule type" value="mRNA"/>
</dbReference>
<dbReference type="EMBL" id="BC002997">
    <property type="protein sequence ID" value="AAH02997.1"/>
    <property type="molecule type" value="mRNA"/>
</dbReference>
<dbReference type="EMBL" id="BC007897">
    <property type="protein sequence ID" value="AAH07897.1"/>
    <property type="molecule type" value="mRNA"/>
</dbReference>
<dbReference type="EMBL" id="U12596">
    <property type="protein sequence ID" value="AAA87705.1"/>
    <property type="status" value="ALT_INIT"/>
    <property type="molecule type" value="mRNA"/>
</dbReference>
<dbReference type="EMBL" id="X86446">
    <property type="protein sequence ID" value="CAA60167.1"/>
    <property type="molecule type" value="mRNA"/>
</dbReference>
<dbReference type="CCDS" id="CCDS3258.1">
    <molecule id="Q13200-1"/>
</dbReference>
<dbReference type="CCDS" id="CCDS63853.1">
    <molecule id="Q13200-3"/>
</dbReference>
<dbReference type="CCDS" id="CCDS63854.1">
    <molecule id="Q13200-2"/>
</dbReference>
<dbReference type="RefSeq" id="NP_001265637.1">
    <molecule id="Q13200-3"/>
    <property type="nucleotide sequence ID" value="NM_001278708.2"/>
</dbReference>
<dbReference type="RefSeq" id="NP_001265638.1">
    <molecule id="Q13200-2"/>
    <property type="nucleotide sequence ID" value="NM_001278709.2"/>
</dbReference>
<dbReference type="RefSeq" id="NP_002799.3">
    <molecule id="Q13200-1"/>
    <property type="nucleotide sequence ID" value="NM_002808.4"/>
</dbReference>
<dbReference type="PDB" id="5GJQ">
    <property type="method" value="EM"/>
    <property type="resolution" value="4.50 A"/>
    <property type="chains" value="Z=1-908"/>
</dbReference>
<dbReference type="PDB" id="5GJR">
    <property type="method" value="EM"/>
    <property type="resolution" value="3.50 A"/>
    <property type="chains" value="AC/Z=1-908"/>
</dbReference>
<dbReference type="PDB" id="5L4K">
    <property type="method" value="EM"/>
    <property type="resolution" value="4.50 A"/>
    <property type="chains" value="Z=1-908"/>
</dbReference>
<dbReference type="PDB" id="5LN3">
    <property type="method" value="EM"/>
    <property type="resolution" value="6.80 A"/>
    <property type="chains" value="Z=1-908"/>
</dbReference>
<dbReference type="PDB" id="5T0C">
    <property type="method" value="EM"/>
    <property type="resolution" value="3.80 A"/>
    <property type="chains" value="Af/Bf=1-908"/>
</dbReference>
<dbReference type="PDB" id="5T0G">
    <property type="method" value="EM"/>
    <property type="resolution" value="4.40 A"/>
    <property type="chains" value="f=164-908"/>
</dbReference>
<dbReference type="PDB" id="5T0H">
    <property type="method" value="EM"/>
    <property type="resolution" value="6.80 A"/>
    <property type="chains" value="f=164-908"/>
</dbReference>
<dbReference type="PDB" id="5T0I">
    <property type="method" value="EM"/>
    <property type="resolution" value="8.00 A"/>
    <property type="chains" value="f=164-908"/>
</dbReference>
<dbReference type="PDB" id="5T0J">
    <property type="method" value="EM"/>
    <property type="resolution" value="8.00 A"/>
    <property type="chains" value="f=164-908"/>
</dbReference>
<dbReference type="PDB" id="5VFP">
    <property type="method" value="EM"/>
    <property type="resolution" value="4.20 A"/>
    <property type="chains" value="f=1-908"/>
</dbReference>
<dbReference type="PDB" id="5VFQ">
    <property type="method" value="EM"/>
    <property type="resolution" value="4.20 A"/>
    <property type="chains" value="f=1-908"/>
</dbReference>
<dbReference type="PDB" id="5VFR">
    <property type="method" value="EM"/>
    <property type="resolution" value="4.90 A"/>
    <property type="chains" value="f=1-908"/>
</dbReference>
<dbReference type="PDB" id="5VFS">
    <property type="method" value="EM"/>
    <property type="resolution" value="3.60 A"/>
    <property type="chains" value="f=6-853"/>
</dbReference>
<dbReference type="PDB" id="5VFT">
    <property type="method" value="EM"/>
    <property type="resolution" value="7.00 A"/>
    <property type="chains" value="f=1-908"/>
</dbReference>
<dbReference type="PDB" id="5VFU">
    <property type="method" value="EM"/>
    <property type="resolution" value="5.80 A"/>
    <property type="chains" value="f=1-908"/>
</dbReference>
<dbReference type="PDB" id="5VHF">
    <property type="method" value="EM"/>
    <property type="resolution" value="5.70 A"/>
    <property type="chains" value="f=6-853"/>
</dbReference>
<dbReference type="PDB" id="5VHH">
    <property type="method" value="EM"/>
    <property type="resolution" value="6.10 A"/>
    <property type="chains" value="f=6-853"/>
</dbReference>
<dbReference type="PDB" id="5VHI">
    <property type="method" value="EM"/>
    <property type="resolution" value="6.80 A"/>
    <property type="chains" value="f=6-853"/>
</dbReference>
<dbReference type="PDB" id="5VHJ">
    <property type="method" value="EM"/>
    <property type="resolution" value="8.50 A"/>
    <property type="chains" value="f=70-853"/>
</dbReference>
<dbReference type="PDB" id="5VHM">
    <property type="method" value="EM"/>
    <property type="resolution" value="8.30 A"/>
    <property type="chains" value="f=6-853"/>
</dbReference>
<dbReference type="PDB" id="5VHN">
    <property type="method" value="EM"/>
    <property type="resolution" value="7.30 A"/>
    <property type="chains" value="f=6-853"/>
</dbReference>
<dbReference type="PDB" id="5VHO">
    <property type="method" value="EM"/>
    <property type="resolution" value="8.30 A"/>
    <property type="chains" value="f=6-853"/>
</dbReference>
<dbReference type="PDB" id="5VHP">
    <property type="method" value="EM"/>
    <property type="resolution" value="7.90 A"/>
    <property type="chains" value="f=70-853"/>
</dbReference>
<dbReference type="PDB" id="5VHQ">
    <property type="method" value="EM"/>
    <property type="resolution" value="8.90 A"/>
    <property type="chains" value="f=6-853"/>
</dbReference>
<dbReference type="PDB" id="5VHR">
    <property type="method" value="EM"/>
    <property type="resolution" value="7.70 A"/>
    <property type="chains" value="f=6-853"/>
</dbReference>
<dbReference type="PDB" id="5VHS">
    <property type="method" value="EM"/>
    <property type="resolution" value="8.80 A"/>
    <property type="chains" value="f=70-853"/>
</dbReference>
<dbReference type="PDB" id="6MSB">
    <property type="method" value="EM"/>
    <property type="resolution" value="3.00 A"/>
    <property type="chains" value="f=1-908"/>
</dbReference>
<dbReference type="PDB" id="6MSD">
    <property type="method" value="EM"/>
    <property type="resolution" value="3.20 A"/>
    <property type="chains" value="f=1-908"/>
</dbReference>
<dbReference type="PDB" id="6MSG">
    <property type="method" value="EM"/>
    <property type="resolution" value="3.50 A"/>
    <property type="chains" value="f=1-892"/>
</dbReference>
<dbReference type="PDB" id="6MSH">
    <property type="method" value="EM"/>
    <property type="resolution" value="3.60 A"/>
    <property type="chains" value="f=1-892"/>
</dbReference>
<dbReference type="PDB" id="6MSJ">
    <property type="method" value="EM"/>
    <property type="resolution" value="3.30 A"/>
    <property type="chains" value="f=1-892"/>
</dbReference>
<dbReference type="PDB" id="6MSK">
    <property type="method" value="EM"/>
    <property type="resolution" value="3.20 A"/>
    <property type="chains" value="f=1-892"/>
</dbReference>
<dbReference type="PDB" id="6WJD">
    <property type="method" value="EM"/>
    <property type="resolution" value="4.80 A"/>
    <property type="chains" value="f=1-908"/>
</dbReference>
<dbReference type="PDB" id="6WJN">
    <property type="method" value="EM"/>
    <property type="resolution" value="5.70 A"/>
    <property type="chains" value="f=1-908"/>
</dbReference>
<dbReference type="PDB" id="7QXN">
    <property type="method" value="EM"/>
    <property type="resolution" value="3.70 A"/>
    <property type="chains" value="f=1-908"/>
</dbReference>
<dbReference type="PDB" id="7QXP">
    <property type="method" value="EM"/>
    <property type="resolution" value="3.60 A"/>
    <property type="chains" value="f=1-908"/>
</dbReference>
<dbReference type="PDB" id="7QXU">
    <property type="method" value="EM"/>
    <property type="resolution" value="4.30 A"/>
    <property type="chains" value="f=1-908"/>
</dbReference>
<dbReference type="PDB" id="7QXW">
    <property type="method" value="EM"/>
    <property type="resolution" value="4.10 A"/>
    <property type="chains" value="f=1-908"/>
</dbReference>
<dbReference type="PDB" id="7QXX">
    <property type="method" value="EM"/>
    <property type="resolution" value="4.40 A"/>
    <property type="chains" value="f=1-908"/>
</dbReference>
<dbReference type="PDB" id="7QY7">
    <property type="method" value="EM"/>
    <property type="resolution" value="4.70 A"/>
    <property type="chains" value="f=1-908"/>
</dbReference>
<dbReference type="PDB" id="7QYA">
    <property type="method" value="EM"/>
    <property type="resolution" value="4.80 A"/>
    <property type="chains" value="f=1-908"/>
</dbReference>
<dbReference type="PDB" id="7QYB">
    <property type="method" value="EM"/>
    <property type="resolution" value="4.10 A"/>
    <property type="chains" value="f=1-908"/>
</dbReference>
<dbReference type="PDB" id="7UIH">
    <property type="method" value="EM"/>
    <property type="resolution" value="3.10 A"/>
    <property type="chains" value="A=260-903"/>
</dbReference>
<dbReference type="PDB" id="7UJD">
    <property type="method" value="EM"/>
    <property type="resolution" value="2.50 A"/>
    <property type="chains" value="A=260-903"/>
</dbReference>
<dbReference type="PDB" id="7W37">
    <property type="method" value="EM"/>
    <property type="resolution" value="3.00 A"/>
    <property type="chains" value="f=1-908"/>
</dbReference>
<dbReference type="PDB" id="7W38">
    <property type="method" value="EM"/>
    <property type="resolution" value="3.10 A"/>
    <property type="chains" value="f=1-908"/>
</dbReference>
<dbReference type="PDB" id="7W39">
    <property type="method" value="EM"/>
    <property type="resolution" value="3.20 A"/>
    <property type="chains" value="f=1-908"/>
</dbReference>
<dbReference type="PDB" id="7W3A">
    <property type="method" value="EM"/>
    <property type="resolution" value="3.50 A"/>
    <property type="chains" value="f=1-908"/>
</dbReference>
<dbReference type="PDB" id="7W3B">
    <property type="method" value="EM"/>
    <property type="resolution" value="3.60 A"/>
    <property type="chains" value="f=1-908"/>
</dbReference>
<dbReference type="PDB" id="7W3C">
    <property type="method" value="EM"/>
    <property type="resolution" value="3.40 A"/>
    <property type="chains" value="f=1-908"/>
</dbReference>
<dbReference type="PDB" id="7W3F">
    <property type="method" value="EM"/>
    <property type="resolution" value="3.30 A"/>
    <property type="chains" value="f=1-908"/>
</dbReference>
<dbReference type="PDB" id="7W3G">
    <property type="method" value="EM"/>
    <property type="resolution" value="3.20 A"/>
    <property type="chains" value="f=1-908"/>
</dbReference>
<dbReference type="PDB" id="7W3H">
    <property type="method" value="EM"/>
    <property type="resolution" value="3.20 A"/>
    <property type="chains" value="f=1-908"/>
</dbReference>
<dbReference type="PDB" id="7W3I">
    <property type="method" value="EM"/>
    <property type="resolution" value="3.50 A"/>
    <property type="chains" value="f=1-908"/>
</dbReference>
<dbReference type="PDB" id="7W3J">
    <property type="method" value="EM"/>
    <property type="resolution" value="3.50 A"/>
    <property type="chains" value="f=1-908"/>
</dbReference>
<dbReference type="PDB" id="7W3K">
    <property type="method" value="EM"/>
    <property type="resolution" value="3.60 A"/>
    <property type="chains" value="f=1-908"/>
</dbReference>
<dbReference type="PDB" id="7W3M">
    <property type="method" value="EM"/>
    <property type="resolution" value="3.50 A"/>
    <property type="chains" value="f=1-908"/>
</dbReference>
<dbReference type="PDB" id="8CVT">
    <property type="method" value="EM"/>
    <property type="resolution" value="3.00 A"/>
    <property type="chains" value="f=1-908"/>
</dbReference>
<dbReference type="PDB" id="8JRI">
    <property type="method" value="EM"/>
    <property type="resolution" value="3.40 A"/>
    <property type="chains" value="f=1-908"/>
</dbReference>
<dbReference type="PDB" id="8JRT">
    <property type="method" value="EM"/>
    <property type="resolution" value="3.60 A"/>
    <property type="chains" value="f=1-908"/>
</dbReference>
<dbReference type="PDB" id="8JTI">
    <property type="method" value="EM"/>
    <property type="resolution" value="3.80 A"/>
    <property type="chains" value="f=1-908"/>
</dbReference>
<dbReference type="PDB" id="8K0G">
    <property type="method" value="EM"/>
    <property type="resolution" value="3.80 A"/>
    <property type="chains" value="f=1-908"/>
</dbReference>
<dbReference type="PDB" id="8USB">
    <property type="method" value="EM"/>
    <property type="resolution" value="2.73 A"/>
    <property type="chains" value="f=1-908"/>
</dbReference>
<dbReference type="PDB" id="8USC">
    <property type="method" value="EM"/>
    <property type="resolution" value="3.10 A"/>
    <property type="chains" value="f=1-908"/>
</dbReference>
<dbReference type="PDB" id="8USD">
    <property type="method" value="EM"/>
    <property type="resolution" value="2.70 A"/>
    <property type="chains" value="f=1-908"/>
</dbReference>
<dbReference type="PDB" id="9E8G">
    <property type="method" value="EM"/>
    <property type="resolution" value="3.01 A"/>
    <property type="chains" value="f=1-908"/>
</dbReference>
<dbReference type="PDB" id="9E8H">
    <property type="method" value="EM"/>
    <property type="resolution" value="2.90 A"/>
    <property type="chains" value="f=1-908"/>
</dbReference>
<dbReference type="PDB" id="9E8I">
    <property type="method" value="EM"/>
    <property type="resolution" value="2.87 A"/>
    <property type="chains" value="f=1-908"/>
</dbReference>
<dbReference type="PDB" id="9E8J">
    <property type="method" value="EM"/>
    <property type="resolution" value="3.47 A"/>
    <property type="chains" value="f=1-908"/>
</dbReference>
<dbReference type="PDB" id="9E8L">
    <property type="method" value="EM"/>
    <property type="resolution" value="3.59 A"/>
    <property type="chains" value="f=1-908"/>
</dbReference>
<dbReference type="PDB" id="9E8N">
    <property type="method" value="EM"/>
    <property type="resolution" value="3.62 A"/>
    <property type="chains" value="f=1-908"/>
</dbReference>
<dbReference type="PDB" id="9E8O">
    <property type="method" value="EM"/>
    <property type="resolution" value="3.10 A"/>
    <property type="chains" value="f=1-908"/>
</dbReference>
<dbReference type="PDB" id="9E8Q">
    <property type="method" value="EM"/>
    <property type="resolution" value="3.16 A"/>
    <property type="chains" value="f=1-908"/>
</dbReference>
<dbReference type="PDBsum" id="5GJQ"/>
<dbReference type="PDBsum" id="5GJR"/>
<dbReference type="PDBsum" id="5L4K"/>
<dbReference type="PDBsum" id="5LN3"/>
<dbReference type="PDBsum" id="5T0C"/>
<dbReference type="PDBsum" id="5T0G"/>
<dbReference type="PDBsum" id="5T0H"/>
<dbReference type="PDBsum" id="5T0I"/>
<dbReference type="PDBsum" id="5T0J"/>
<dbReference type="PDBsum" id="5VFP"/>
<dbReference type="PDBsum" id="5VFQ"/>
<dbReference type="PDBsum" id="5VFR"/>
<dbReference type="PDBsum" id="5VFS"/>
<dbReference type="PDBsum" id="5VFT"/>
<dbReference type="PDBsum" id="5VFU"/>
<dbReference type="PDBsum" id="5VHF"/>
<dbReference type="PDBsum" id="5VHH"/>
<dbReference type="PDBsum" id="5VHI"/>
<dbReference type="PDBsum" id="5VHJ"/>
<dbReference type="PDBsum" id="5VHM"/>
<dbReference type="PDBsum" id="5VHN"/>
<dbReference type="PDBsum" id="5VHO"/>
<dbReference type="PDBsum" id="5VHP"/>
<dbReference type="PDBsum" id="5VHQ"/>
<dbReference type="PDBsum" id="5VHR"/>
<dbReference type="PDBsum" id="5VHS"/>
<dbReference type="PDBsum" id="6MSB"/>
<dbReference type="PDBsum" id="6MSD"/>
<dbReference type="PDBsum" id="6MSG"/>
<dbReference type="PDBsum" id="6MSH"/>
<dbReference type="PDBsum" id="6MSJ"/>
<dbReference type="PDBsum" id="6MSK"/>
<dbReference type="PDBsum" id="6WJD"/>
<dbReference type="PDBsum" id="6WJN"/>
<dbReference type="PDBsum" id="7QXN"/>
<dbReference type="PDBsum" id="7QXP"/>
<dbReference type="PDBsum" id="7QXU"/>
<dbReference type="PDBsum" id="7QXW"/>
<dbReference type="PDBsum" id="7QXX"/>
<dbReference type="PDBsum" id="7QY7"/>
<dbReference type="PDBsum" id="7QYA"/>
<dbReference type="PDBsum" id="7QYB"/>
<dbReference type="PDBsum" id="7UIH"/>
<dbReference type="PDBsum" id="7UJD"/>
<dbReference type="PDBsum" id="7W37"/>
<dbReference type="PDBsum" id="7W38"/>
<dbReference type="PDBsum" id="7W39"/>
<dbReference type="PDBsum" id="7W3A"/>
<dbReference type="PDBsum" id="7W3B"/>
<dbReference type="PDBsum" id="7W3C"/>
<dbReference type="PDBsum" id="7W3F"/>
<dbReference type="PDBsum" id="7W3G"/>
<dbReference type="PDBsum" id="7W3H"/>
<dbReference type="PDBsum" id="7W3I"/>
<dbReference type="PDBsum" id="7W3J"/>
<dbReference type="PDBsum" id="7W3K"/>
<dbReference type="PDBsum" id="7W3M"/>
<dbReference type="PDBsum" id="8CVT"/>
<dbReference type="PDBsum" id="8JRI"/>
<dbReference type="PDBsum" id="8JRT"/>
<dbReference type="PDBsum" id="8JTI"/>
<dbReference type="PDBsum" id="8K0G"/>
<dbReference type="PDBsum" id="8USB"/>
<dbReference type="PDBsum" id="8USC"/>
<dbReference type="PDBsum" id="8USD"/>
<dbReference type="PDBsum" id="9E8G"/>
<dbReference type="PDBsum" id="9E8H"/>
<dbReference type="PDBsum" id="9E8I"/>
<dbReference type="PDBsum" id="9E8J"/>
<dbReference type="PDBsum" id="9E8L"/>
<dbReference type="PDBsum" id="9E8N"/>
<dbReference type="PDBsum" id="9E8O"/>
<dbReference type="PDBsum" id="9E8Q"/>
<dbReference type="EMDB" id="EMD-14201"/>
<dbReference type="EMDB" id="EMD-14202"/>
<dbReference type="EMDB" id="EMD-14203"/>
<dbReference type="EMDB" id="EMD-14204"/>
<dbReference type="EMDB" id="EMD-14205"/>
<dbReference type="EMDB" id="EMD-14209"/>
<dbReference type="EMDB" id="EMD-14210"/>
<dbReference type="EMDB" id="EMD-14211"/>
<dbReference type="EMDB" id="EMD-21691"/>
<dbReference type="EMDB" id="EMD-21696"/>
<dbReference type="EMDB" id="EMD-27018"/>
<dbReference type="EMDB" id="EMD-32272"/>
<dbReference type="EMDB" id="EMD-32273"/>
<dbReference type="EMDB" id="EMD-32274"/>
<dbReference type="EMDB" id="EMD-32275"/>
<dbReference type="EMDB" id="EMD-32276"/>
<dbReference type="EMDB" id="EMD-32277"/>
<dbReference type="EMDB" id="EMD-32278"/>
<dbReference type="EMDB" id="EMD-32279"/>
<dbReference type="EMDB" id="EMD-32280"/>
<dbReference type="EMDB" id="EMD-32281"/>
<dbReference type="EMDB" id="EMD-32282"/>
<dbReference type="EMDB" id="EMD-32283"/>
<dbReference type="EMDB" id="EMD-32284"/>
<dbReference type="EMDB" id="EMD-36598"/>
<dbReference type="EMDB" id="EMD-36605"/>
<dbReference type="EMDB" id="EMD-36645"/>
<dbReference type="EMDB" id="EMD-36764"/>
<dbReference type="EMDB" id="EMD-4089"/>
<dbReference type="EMDB" id="EMD-42506"/>
<dbReference type="EMDB" id="EMD-42507"/>
<dbReference type="EMDB" id="EMD-42508"/>
<dbReference type="EMDB" id="EMD-47719"/>
<dbReference type="EMDB" id="EMD-47720"/>
<dbReference type="EMDB" id="EMD-47721"/>
<dbReference type="EMDB" id="EMD-47722"/>
<dbReference type="EMDB" id="EMD-47724"/>
<dbReference type="EMDB" id="EMD-47725"/>
<dbReference type="EMDB" id="EMD-47726"/>
<dbReference type="EMDB" id="EMD-47727"/>
<dbReference type="EMDB" id="EMD-60138"/>
<dbReference type="EMDB" id="EMD-60139"/>
<dbReference type="EMDB" id="EMD-8663"/>
<dbReference type="EMDB" id="EMD-8664"/>
<dbReference type="EMDB" id="EMD-8665"/>
<dbReference type="EMDB" id="EMD-8666"/>
<dbReference type="EMDB" id="EMD-8667"/>
<dbReference type="EMDB" id="EMD-8668"/>
<dbReference type="EMDB" id="EMD-8674"/>
<dbReference type="EMDB" id="EMD-8675"/>
<dbReference type="EMDB" id="EMD-8676"/>
<dbReference type="EMDB" id="EMD-8677"/>
<dbReference type="EMDB" id="EMD-8678"/>
<dbReference type="EMDB" id="EMD-8679"/>
<dbReference type="EMDB" id="EMD-8680"/>
<dbReference type="EMDB" id="EMD-8681"/>
<dbReference type="EMDB" id="EMD-8682"/>
<dbReference type="EMDB" id="EMD-8683"/>
<dbReference type="EMDB" id="EMD-8684"/>
<dbReference type="EMDB" id="EMD-9216"/>
<dbReference type="EMDB" id="EMD-9217"/>
<dbReference type="EMDB" id="EMD-9218"/>
<dbReference type="EMDB" id="EMD-9219"/>
<dbReference type="EMDB" id="EMD-9220"/>
<dbReference type="EMDB" id="EMD-9221"/>
<dbReference type="EMDB" id="EMD-9222"/>
<dbReference type="EMDB" id="EMD-9511"/>
<dbReference type="EMDB" id="EMD-9512"/>
<dbReference type="SMR" id="Q13200"/>
<dbReference type="BioGRID" id="111681">
    <property type="interactions" value="444"/>
</dbReference>
<dbReference type="ComplexPortal" id="CPX-5993">
    <property type="entry name" value="26S proteasome complex"/>
</dbReference>
<dbReference type="ComplexPortal" id="CPX-8964">
    <property type="entry name" value="19S proteasome regulatory complex"/>
</dbReference>
<dbReference type="ComplexPortal" id="CPX-9082">
    <property type="entry name" value="19S-20S-PA28-alphabeta hybrid proteasome complex"/>
</dbReference>
<dbReference type="ComplexPortal" id="CPX-9085">
    <property type="entry name" value="19S-20S-PA28-gamma hybrid proteasome complex"/>
</dbReference>
<dbReference type="ComplexPortal" id="CPX-9086">
    <property type="entry name" value="30S proteasome complex"/>
</dbReference>
<dbReference type="CORUM" id="Q13200"/>
<dbReference type="DIP" id="DIP-38204N"/>
<dbReference type="FunCoup" id="Q13200">
    <property type="interactions" value="2978"/>
</dbReference>
<dbReference type="IntAct" id="Q13200">
    <property type="interactions" value="267"/>
</dbReference>
<dbReference type="MINT" id="Q13200"/>
<dbReference type="STRING" id="9606.ENSP00000310129"/>
<dbReference type="ChEMBL" id="CHEMBL2364701"/>
<dbReference type="MoonDB" id="Q13200">
    <property type="type" value="Predicted"/>
</dbReference>
<dbReference type="GlyGen" id="Q13200">
    <property type="glycosylation" value="2 sites, 1 O-linked glycan (2 sites)"/>
</dbReference>
<dbReference type="iPTMnet" id="Q13200"/>
<dbReference type="MetOSite" id="Q13200"/>
<dbReference type="PhosphoSitePlus" id="Q13200"/>
<dbReference type="SwissPalm" id="Q13200"/>
<dbReference type="BioMuta" id="PSMD2"/>
<dbReference type="DMDM" id="6174930"/>
<dbReference type="CPTAC" id="CPTAC-261"/>
<dbReference type="jPOST" id="Q13200"/>
<dbReference type="MassIVE" id="Q13200"/>
<dbReference type="PaxDb" id="9606-ENSP00000310129"/>
<dbReference type="PeptideAtlas" id="Q13200"/>
<dbReference type="PRIDE" id="Q13200"/>
<dbReference type="ProteomicsDB" id="18762"/>
<dbReference type="ProteomicsDB" id="19502"/>
<dbReference type="ProteomicsDB" id="59219">
    <molecule id="Q13200-1"/>
</dbReference>
<dbReference type="Pumba" id="Q13200"/>
<dbReference type="Antibodypedia" id="33807">
    <property type="antibodies" value="600 antibodies from 35 providers"/>
</dbReference>
<dbReference type="DNASU" id="5708"/>
<dbReference type="Ensembl" id="ENST00000310118.9">
    <molecule id="Q13200-1"/>
    <property type="protein sequence ID" value="ENSP00000310129.4"/>
    <property type="gene ID" value="ENSG00000175166.17"/>
</dbReference>
<dbReference type="Ensembl" id="ENST00000435761.5">
    <molecule id="Q13200-2"/>
    <property type="protein sequence ID" value="ENSP00000402618.1"/>
    <property type="gene ID" value="ENSG00000175166.17"/>
</dbReference>
<dbReference type="Ensembl" id="ENST00000439383.5">
    <molecule id="Q13200-3"/>
    <property type="protein sequence ID" value="ENSP00000416028.1"/>
    <property type="gene ID" value="ENSG00000175166.17"/>
</dbReference>
<dbReference type="GeneID" id="5708"/>
<dbReference type="KEGG" id="hsa:5708"/>
<dbReference type="MANE-Select" id="ENST00000310118.9">
    <property type="protein sequence ID" value="ENSP00000310129.4"/>
    <property type="RefSeq nucleotide sequence ID" value="NM_002808.5"/>
    <property type="RefSeq protein sequence ID" value="NP_002799.3"/>
</dbReference>
<dbReference type="UCSC" id="uc003fnn.3">
    <molecule id="Q13200-1"/>
    <property type="organism name" value="human"/>
</dbReference>
<dbReference type="AGR" id="HGNC:9559"/>
<dbReference type="CTD" id="5708"/>
<dbReference type="DisGeNET" id="5708"/>
<dbReference type="GeneCards" id="PSMD2"/>
<dbReference type="HGNC" id="HGNC:9559">
    <property type="gene designation" value="PSMD2"/>
</dbReference>
<dbReference type="HPA" id="ENSG00000175166">
    <property type="expression patterns" value="Tissue enhanced (skeletal)"/>
</dbReference>
<dbReference type="MIM" id="606223">
    <property type="type" value="gene"/>
</dbReference>
<dbReference type="neXtProt" id="NX_Q13200"/>
<dbReference type="OpenTargets" id="ENSG00000175166"/>
<dbReference type="PharmGKB" id="PA33905"/>
<dbReference type="VEuPathDB" id="HostDB:ENSG00000175166"/>
<dbReference type="eggNOG" id="KOG2005">
    <property type="taxonomic scope" value="Eukaryota"/>
</dbReference>
<dbReference type="GeneTree" id="ENSGT00940000153386"/>
<dbReference type="HOGENOM" id="CLU_008705_1_0_1"/>
<dbReference type="InParanoid" id="Q13200"/>
<dbReference type="OMA" id="GTCNGDI"/>
<dbReference type="OrthoDB" id="10252509at2759"/>
<dbReference type="PAN-GO" id="Q13200">
    <property type="GO annotations" value="4 GO annotations based on evolutionary models"/>
</dbReference>
<dbReference type="PhylomeDB" id="Q13200"/>
<dbReference type="TreeFam" id="TF105739"/>
<dbReference type="PathwayCommons" id="Q13200"/>
<dbReference type="Reactome" id="R-HSA-1169091">
    <property type="pathway name" value="Activation of NF-kappaB in B cells"/>
</dbReference>
<dbReference type="Reactome" id="R-HSA-1234176">
    <property type="pathway name" value="Oxygen-dependent proline hydroxylation of Hypoxia-inducible Factor Alpha"/>
</dbReference>
<dbReference type="Reactome" id="R-HSA-1236974">
    <property type="pathway name" value="ER-Phagosome pathway"/>
</dbReference>
<dbReference type="Reactome" id="R-HSA-1236978">
    <property type="pathway name" value="Cross-presentation of soluble exogenous antigens (endosomes)"/>
</dbReference>
<dbReference type="Reactome" id="R-HSA-174084">
    <property type="pathway name" value="Autodegradation of Cdh1 by Cdh1:APC/C"/>
</dbReference>
<dbReference type="Reactome" id="R-HSA-174113">
    <property type="pathway name" value="SCF-beta-TrCP mediated degradation of Emi1"/>
</dbReference>
<dbReference type="Reactome" id="R-HSA-174154">
    <property type="pathway name" value="APC/C:Cdc20 mediated degradation of Securin"/>
</dbReference>
<dbReference type="Reactome" id="R-HSA-174178">
    <property type="pathway name" value="APC/C:Cdh1 mediated degradation of Cdc20 and other APC/C:Cdh1 targeted proteins in late mitosis/early G1"/>
</dbReference>
<dbReference type="Reactome" id="R-HSA-174184">
    <property type="pathway name" value="Cdc20:Phospho-APC/C mediated degradation of Cyclin A"/>
</dbReference>
<dbReference type="Reactome" id="R-HSA-180534">
    <property type="pathway name" value="Vpu mediated degradation of CD4"/>
</dbReference>
<dbReference type="Reactome" id="R-HSA-180585">
    <property type="pathway name" value="Vif-mediated degradation of APOBEC3G"/>
</dbReference>
<dbReference type="Reactome" id="R-HSA-187577">
    <property type="pathway name" value="SCF(Skp2)-mediated degradation of p27/p21"/>
</dbReference>
<dbReference type="Reactome" id="R-HSA-195253">
    <property type="pathway name" value="Degradation of beta-catenin by the destruction complex"/>
</dbReference>
<dbReference type="Reactome" id="R-HSA-202424">
    <property type="pathway name" value="Downstream TCR signaling"/>
</dbReference>
<dbReference type="Reactome" id="R-HSA-211733">
    <property type="pathway name" value="Regulation of activated PAK-2p34 by proteasome mediated degradation"/>
</dbReference>
<dbReference type="Reactome" id="R-HSA-2467813">
    <property type="pathway name" value="Separation of Sister Chromatids"/>
</dbReference>
<dbReference type="Reactome" id="R-HSA-2871837">
    <property type="pathway name" value="FCERI mediated NF-kB activation"/>
</dbReference>
<dbReference type="Reactome" id="R-HSA-349425">
    <property type="pathway name" value="Autodegradation of the E3 ubiquitin ligase COP1"/>
</dbReference>
<dbReference type="Reactome" id="R-HSA-350562">
    <property type="pathway name" value="Regulation of ornithine decarboxylase (ODC)"/>
</dbReference>
<dbReference type="Reactome" id="R-HSA-382556">
    <property type="pathway name" value="ABC-family proteins mediated transport"/>
</dbReference>
<dbReference type="Reactome" id="R-HSA-450408">
    <property type="pathway name" value="AUF1 (hnRNP D0) binds and destabilizes mRNA"/>
</dbReference>
<dbReference type="Reactome" id="R-HSA-4608870">
    <property type="pathway name" value="Asymmetric localization of PCP proteins"/>
</dbReference>
<dbReference type="Reactome" id="R-HSA-4641257">
    <property type="pathway name" value="Degradation of AXIN"/>
</dbReference>
<dbReference type="Reactome" id="R-HSA-4641258">
    <property type="pathway name" value="Degradation of DVL"/>
</dbReference>
<dbReference type="Reactome" id="R-HSA-5358346">
    <property type="pathway name" value="Hedgehog ligand biogenesis"/>
</dbReference>
<dbReference type="Reactome" id="R-HSA-5362768">
    <property type="pathway name" value="Hh mutants are degraded by ERAD"/>
</dbReference>
<dbReference type="Reactome" id="R-HSA-5607761">
    <property type="pathway name" value="Dectin-1 mediated noncanonical NF-kB signaling"/>
</dbReference>
<dbReference type="Reactome" id="R-HSA-5607764">
    <property type="pathway name" value="CLEC7A (Dectin-1) signaling"/>
</dbReference>
<dbReference type="Reactome" id="R-HSA-5610780">
    <property type="pathway name" value="Degradation of GLI1 by the proteasome"/>
</dbReference>
<dbReference type="Reactome" id="R-HSA-5610783">
    <property type="pathway name" value="Degradation of GLI2 by the proteasome"/>
</dbReference>
<dbReference type="Reactome" id="R-HSA-5610785">
    <property type="pathway name" value="GLI3 is processed to GLI3R by the proteasome"/>
</dbReference>
<dbReference type="Reactome" id="R-HSA-5632684">
    <property type="pathway name" value="Hedgehog 'on' state"/>
</dbReference>
<dbReference type="Reactome" id="R-HSA-5658442">
    <property type="pathway name" value="Regulation of RAS by GAPs"/>
</dbReference>
<dbReference type="Reactome" id="R-HSA-5668541">
    <property type="pathway name" value="TNFR2 non-canonical NF-kB pathway"/>
</dbReference>
<dbReference type="Reactome" id="R-HSA-5676590">
    <property type="pathway name" value="NIK--&gt;noncanonical NF-kB signaling"/>
</dbReference>
<dbReference type="Reactome" id="R-HSA-5678895">
    <property type="pathway name" value="Defective CFTR causes cystic fibrosis"/>
</dbReference>
<dbReference type="Reactome" id="R-HSA-5687128">
    <property type="pathway name" value="MAPK6/MAPK4 signaling"/>
</dbReference>
<dbReference type="Reactome" id="R-HSA-5689603">
    <property type="pathway name" value="UCH proteinases"/>
</dbReference>
<dbReference type="Reactome" id="R-HSA-5689880">
    <property type="pathway name" value="Ub-specific processing proteases"/>
</dbReference>
<dbReference type="Reactome" id="R-HSA-6798695">
    <property type="pathway name" value="Neutrophil degranulation"/>
</dbReference>
<dbReference type="Reactome" id="R-HSA-68867">
    <property type="pathway name" value="Assembly of the pre-replicative complex"/>
</dbReference>
<dbReference type="Reactome" id="R-HSA-68949">
    <property type="pathway name" value="Orc1 removal from chromatin"/>
</dbReference>
<dbReference type="Reactome" id="R-HSA-69017">
    <property type="pathway name" value="CDK-mediated phosphorylation and removal of Cdc6"/>
</dbReference>
<dbReference type="Reactome" id="R-HSA-69481">
    <property type="pathway name" value="G2/M Checkpoints"/>
</dbReference>
<dbReference type="Reactome" id="R-HSA-69601">
    <property type="pathway name" value="Ubiquitin Mediated Degradation of Phosphorylated Cdc25A"/>
</dbReference>
<dbReference type="Reactome" id="R-HSA-75815">
    <property type="pathway name" value="Ubiquitin-dependent degradation of Cyclin D"/>
</dbReference>
<dbReference type="Reactome" id="R-HSA-8852276">
    <property type="pathway name" value="The role of GTSE1 in G2/M progression after G2 checkpoint"/>
</dbReference>
<dbReference type="Reactome" id="R-HSA-8854050">
    <property type="pathway name" value="FBXL7 down-regulates AURKA during mitotic entry and in early mitosis"/>
</dbReference>
<dbReference type="Reactome" id="R-HSA-8939236">
    <property type="pathway name" value="RUNX1 regulates transcription of genes involved in differentiation of HSCs"/>
</dbReference>
<dbReference type="Reactome" id="R-HSA-8939902">
    <property type="pathway name" value="Regulation of RUNX2 expression and activity"/>
</dbReference>
<dbReference type="Reactome" id="R-HSA-8941858">
    <property type="pathway name" value="Regulation of RUNX3 expression and activity"/>
</dbReference>
<dbReference type="Reactome" id="R-HSA-8948751">
    <property type="pathway name" value="Regulation of PTEN stability and activity"/>
</dbReference>
<dbReference type="Reactome" id="R-HSA-8951664">
    <property type="pathway name" value="Neddylation"/>
</dbReference>
<dbReference type="Reactome" id="R-HSA-9010553">
    <property type="pathway name" value="Regulation of expression of SLITs and ROBOs"/>
</dbReference>
<dbReference type="Reactome" id="R-HSA-9020702">
    <property type="pathway name" value="Interleukin-1 signaling"/>
</dbReference>
<dbReference type="Reactome" id="R-HSA-9604323">
    <property type="pathway name" value="Negative regulation of NOTCH4 signaling"/>
</dbReference>
<dbReference type="Reactome" id="R-HSA-9755511">
    <property type="pathway name" value="KEAP1-NFE2L2 pathway"/>
</dbReference>
<dbReference type="Reactome" id="R-HSA-9762114">
    <property type="pathway name" value="GSK3B and BTRC:CUL1-mediated-degradation of NFE2L2"/>
</dbReference>
<dbReference type="Reactome" id="R-HSA-9824272">
    <property type="pathway name" value="Somitogenesis"/>
</dbReference>
<dbReference type="Reactome" id="R-HSA-983168">
    <property type="pathway name" value="Antigen processing: Ubiquitination &amp; Proteasome degradation"/>
</dbReference>
<dbReference type="Reactome" id="R-HSA-9907900">
    <property type="pathway name" value="Proteasome assembly"/>
</dbReference>
<dbReference type="SignaLink" id="Q13200"/>
<dbReference type="SIGNOR" id="Q13200"/>
<dbReference type="BioGRID-ORCS" id="5708">
    <property type="hits" value="797 hits in 1170 CRISPR screens"/>
</dbReference>
<dbReference type="CD-CODE" id="8C2F96ED">
    <property type="entry name" value="Centrosome"/>
</dbReference>
<dbReference type="CD-CODE" id="DEE660B4">
    <property type="entry name" value="Stress granule"/>
</dbReference>
<dbReference type="CD-CODE" id="FB4E32DD">
    <property type="entry name" value="Presynaptic clusters and postsynaptic densities"/>
</dbReference>
<dbReference type="ChiTaRS" id="PSMD2">
    <property type="organism name" value="human"/>
</dbReference>
<dbReference type="GeneWiki" id="PSMD2"/>
<dbReference type="GenomeRNAi" id="5708"/>
<dbReference type="Pharos" id="Q13200">
    <property type="development level" value="Tbio"/>
</dbReference>
<dbReference type="PRO" id="PR:Q13200"/>
<dbReference type="Proteomes" id="UP000005640">
    <property type="component" value="Chromosome 3"/>
</dbReference>
<dbReference type="RNAct" id="Q13200">
    <property type="molecule type" value="protein"/>
</dbReference>
<dbReference type="Bgee" id="ENSG00000175166">
    <property type="expression patterns" value="Expressed in secondary oocyte and 208 other cell types or tissues"/>
</dbReference>
<dbReference type="ExpressionAtlas" id="Q13200">
    <property type="expression patterns" value="baseline and differential"/>
</dbReference>
<dbReference type="GO" id="GO:0005829">
    <property type="term" value="C:cytosol"/>
    <property type="evidence" value="ECO:0000304"/>
    <property type="project" value="Reactome"/>
</dbReference>
<dbReference type="GO" id="GO:0070062">
    <property type="term" value="C:extracellular exosome"/>
    <property type="evidence" value="ECO:0007005"/>
    <property type="project" value="UniProtKB"/>
</dbReference>
<dbReference type="GO" id="GO:0005576">
    <property type="term" value="C:extracellular region"/>
    <property type="evidence" value="ECO:0000304"/>
    <property type="project" value="Reactome"/>
</dbReference>
<dbReference type="GO" id="GO:1904813">
    <property type="term" value="C:ficolin-1-rich granule lumen"/>
    <property type="evidence" value="ECO:0000304"/>
    <property type="project" value="Reactome"/>
</dbReference>
<dbReference type="GO" id="GO:0016020">
    <property type="term" value="C:membrane"/>
    <property type="evidence" value="ECO:0007005"/>
    <property type="project" value="UniProtKB"/>
</dbReference>
<dbReference type="GO" id="GO:0005654">
    <property type="term" value="C:nucleoplasm"/>
    <property type="evidence" value="ECO:0000304"/>
    <property type="project" value="Reactome"/>
</dbReference>
<dbReference type="GO" id="GO:0005634">
    <property type="term" value="C:nucleus"/>
    <property type="evidence" value="ECO:0000318"/>
    <property type="project" value="GO_Central"/>
</dbReference>
<dbReference type="GO" id="GO:0022624">
    <property type="term" value="C:proteasome accessory complex"/>
    <property type="evidence" value="ECO:0000250"/>
    <property type="project" value="UniProtKB"/>
</dbReference>
<dbReference type="GO" id="GO:0000502">
    <property type="term" value="C:proteasome complex"/>
    <property type="evidence" value="ECO:0000314"/>
    <property type="project" value="UniProtKB"/>
</dbReference>
<dbReference type="GO" id="GO:0005838">
    <property type="term" value="C:proteasome regulatory particle"/>
    <property type="evidence" value="ECO:0000304"/>
    <property type="project" value="ProtInc"/>
</dbReference>
<dbReference type="GO" id="GO:0008540">
    <property type="term" value="C:proteasome regulatory particle, base subcomplex"/>
    <property type="evidence" value="ECO:0000318"/>
    <property type="project" value="GO_Central"/>
</dbReference>
<dbReference type="GO" id="GO:0034515">
    <property type="term" value="C:proteasome storage granule"/>
    <property type="evidence" value="ECO:0000318"/>
    <property type="project" value="GO_Central"/>
</dbReference>
<dbReference type="GO" id="GO:0034774">
    <property type="term" value="C:secretory granule lumen"/>
    <property type="evidence" value="ECO:0000304"/>
    <property type="project" value="Reactome"/>
</dbReference>
<dbReference type="GO" id="GO:0030234">
    <property type="term" value="F:enzyme regulator activity"/>
    <property type="evidence" value="ECO:0007669"/>
    <property type="project" value="InterPro"/>
</dbReference>
<dbReference type="GO" id="GO:0043161">
    <property type="term" value="P:proteasome-mediated ubiquitin-dependent protein catabolic process"/>
    <property type="evidence" value="ECO:0000318"/>
    <property type="project" value="GO_Central"/>
</dbReference>
<dbReference type="GO" id="GO:0042176">
    <property type="term" value="P:regulation of protein catabolic process"/>
    <property type="evidence" value="ECO:0007669"/>
    <property type="project" value="InterPro"/>
</dbReference>
<dbReference type="FunFam" id="1.25.10.10:FF:000026">
    <property type="entry name" value="26S proteasome non-ATPase regulatory subunit 2"/>
    <property type="match status" value="1"/>
</dbReference>
<dbReference type="Gene3D" id="1.25.10.10">
    <property type="entry name" value="Leucine-rich Repeat Variant"/>
    <property type="match status" value="1"/>
</dbReference>
<dbReference type="InterPro" id="IPR016643">
    <property type="entry name" value="26S_Psome_Rpn1"/>
</dbReference>
<dbReference type="InterPro" id="IPR011989">
    <property type="entry name" value="ARM-like"/>
</dbReference>
<dbReference type="InterPro" id="IPR016024">
    <property type="entry name" value="ARM-type_fold"/>
</dbReference>
<dbReference type="InterPro" id="IPR002015">
    <property type="entry name" value="Proteasome/cyclosome_rpt"/>
</dbReference>
<dbReference type="InterPro" id="IPR041433">
    <property type="entry name" value="RPN1_C"/>
</dbReference>
<dbReference type="InterPro" id="IPR040892">
    <property type="entry name" value="RPN1_N"/>
</dbReference>
<dbReference type="PANTHER" id="PTHR10943">
    <property type="entry name" value="26S PROTEASOME NON-ATPASE REGULATORY SUBUNIT"/>
    <property type="match status" value="1"/>
</dbReference>
<dbReference type="PANTHER" id="PTHR10943:SF1">
    <property type="entry name" value="26S PROTEASOME NON-ATPASE REGULATORY SUBUNIT 2"/>
    <property type="match status" value="1"/>
</dbReference>
<dbReference type="Pfam" id="PF01851">
    <property type="entry name" value="PC_rep"/>
    <property type="match status" value="2"/>
</dbReference>
<dbReference type="Pfam" id="PF18051">
    <property type="entry name" value="RPN1_C"/>
    <property type="match status" value="1"/>
</dbReference>
<dbReference type="Pfam" id="PF17781">
    <property type="entry name" value="RPN1_RPN2_N"/>
    <property type="match status" value="1"/>
</dbReference>
<dbReference type="PIRSF" id="PIRSF015965">
    <property type="entry name" value="26S_Psome_Rpn1"/>
    <property type="match status" value="1"/>
</dbReference>
<dbReference type="SUPFAM" id="SSF48371">
    <property type="entry name" value="ARM repeat"/>
    <property type="match status" value="1"/>
</dbReference>
<sequence length="908" mass="100200">MEEGGRDKAPVQPQQSPAAAPGGTDEKPSGKERRDAGDKDKEQELSEEDKQLQDELEMLVERLGEKDTSLYRPALEELRRQIRSSTTSMTSVPKPLKFLRPHYGKLKEIYENMAPGENKRFAADIISVLAMTMSGERECLKYRLVGSQEELASWGHEYVRHLAGEVAKEWQELDDAEKVQREPLLTLVKEIVPYNMAHNAEHEACDLLMEIEQVDMLEKDIDENAYAKVCLYLTSCVNYVPEPENSALLRCALGVFRKFSRFPEALRLALMLNDMELVEDIFTSCKDVVVQKQMAFMLGRHGVFLELSEDVEEYEDLTEIMSNVQLNSNFLALARELDIMEPKVPDDIYKTHLENNRFGGSGSQVDSARMNLASSFVNGFVNAAFGQDKLLTDDGNKWLYKNKDHGMLSAAASLGMILLWDVDGGLTQIDKYLYSSEDYIKSGALLACGIVNSGVRNECDPALALLSDYVLHNSNTMRLGSIFGLGLAYAGSNREDVLTLLLPVMGDSKSSMEVAGVTALACGMIAVGSCNGDVTSTILQTIMEKSETELKDTYARWLPLGLGLNHLGKGEAIEAILAALEVVSEPFRSFANTLVDVCAYAGSGNVLKVQQLLHICSEHFDSKEKEEDKDKKEKKDKDKKEAPADMGAHQGVAVLGIALIAMGEEIGAEMALRTFGHLLRYGEPTLRRAVPLALALISVSNPRLNILDTLSKFSHDADPEVSYNSIFAMGMVGSGTNNARLAAMLRQLAQYHAKDPNNLFMVRLAQGLTHLGKGTLTLCPYHSDRQLMSQVAVAGLLTVLVSFLDVRNIILGKSHYVLYGLVAAMQPRMLVTFDEELRPLPVSVRVGQAVDVVGQAGKPKTITGFQTHTTPVLLAHGERAELATEEFLPVTPILEGFVILRKNPNYDL</sequence>
<feature type="chain" id="PRO_0000173810" description="26S proteasome non-ATPase regulatory subunit 2">
    <location>
        <begin position="1"/>
        <end position="908"/>
    </location>
</feature>
<feature type="repeat" description="PC 1">
    <location>
        <begin position="409"/>
        <end position="442"/>
    </location>
</feature>
<feature type="repeat" description="PC 2">
    <location>
        <begin position="443"/>
        <end position="479"/>
    </location>
</feature>
<feature type="repeat" description="PC 3">
    <location>
        <begin position="480"/>
        <end position="514"/>
    </location>
</feature>
<feature type="repeat" description="PC 4">
    <location>
        <begin position="517"/>
        <end position="551"/>
    </location>
</feature>
<feature type="repeat" description="PC 5">
    <location>
        <begin position="560"/>
        <end position="589"/>
    </location>
</feature>
<feature type="repeat" description="PC 6">
    <location>
        <begin position="692"/>
        <end position="723"/>
    </location>
</feature>
<feature type="repeat" description="PC 7">
    <location>
        <begin position="742"/>
        <end position="757"/>
    </location>
</feature>
<feature type="region of interest" description="Disordered" evidence="2">
    <location>
        <begin position="1"/>
        <end position="52"/>
    </location>
</feature>
<feature type="region of interest" description="Disordered" evidence="2">
    <location>
        <begin position="623"/>
        <end position="645"/>
    </location>
</feature>
<feature type="region of interest" description="Required for interaction with UBLCP1" evidence="8">
    <location>
        <begin position="708"/>
        <end position="903"/>
    </location>
</feature>
<feature type="compositionally biased region" description="Low complexity" evidence="2">
    <location>
        <begin position="10"/>
        <end position="21"/>
    </location>
</feature>
<feature type="compositionally biased region" description="Basic and acidic residues" evidence="2">
    <location>
        <begin position="24"/>
        <end position="52"/>
    </location>
</feature>
<feature type="compositionally biased region" description="Basic and acidic residues" evidence="2">
    <location>
        <begin position="623"/>
        <end position="643"/>
    </location>
</feature>
<feature type="modified residue" description="N-acetylmethionine" evidence="1">
    <location>
        <position position="1"/>
    </location>
</feature>
<feature type="modified residue" description="Phosphoserine" evidence="12 13 14 15 16 17 18 19 20 21">
    <location>
        <position position="16"/>
    </location>
</feature>
<feature type="modified residue" description="Phosphothreonine" evidence="13 18">
    <location>
        <position position="24"/>
    </location>
</feature>
<feature type="modified residue" description="Phosphoserine" evidence="13">
    <location>
        <position position="29"/>
    </location>
</feature>
<feature type="modified residue" description="Phosphoserine" evidence="20">
    <location>
        <position position="147"/>
    </location>
</feature>
<feature type="modified residue" description="Phosphotyrosine" evidence="13">
    <location>
        <position position="194"/>
    </location>
</feature>
<feature type="modified residue" description="Phosphoserine" evidence="17 18 19 20 21">
    <location>
        <position position="361"/>
    </location>
</feature>
<feature type="modified residue" description="Phosphoserine" evidence="21">
    <location>
        <position position="363"/>
    </location>
</feature>
<feature type="modified residue" description="N6-acetyllysine" evidence="1">
    <location>
        <position position="551"/>
    </location>
</feature>
<feature type="splice variant" id="VSP_055065" description="In isoform 2." evidence="10">
    <original>MEEGGRDKAPVQPQQSPAAAPGGTDEKPSGKERRDAGDKDKEQELSEEDKQLQDELEMLVERLGEKDTSLYRPALEELRRQIRSSTTSMTSVPKPLKFLRPHYGKLKEIYENMAPGENKRFAADIISVLAMTMSGERECLKYRLVGSQEELASWGHEYVRHLA</original>
    <variation>MSMS</variation>
    <location>
        <begin position="1"/>
        <end position="163"/>
    </location>
</feature>
<feature type="splice variant" id="VSP_055066" description="In isoform 3." evidence="10">
    <location>
        <begin position="1"/>
        <end position="130"/>
    </location>
</feature>
<feature type="sequence variant" id="VAR_051554" description="In dbSNP:rs11545172.">
    <original>A</original>
    <variation>T</variation>
    <location>
        <position position="176"/>
    </location>
</feature>
<feature type="sequence variant" id="VAR_051555" description="In dbSNP:rs11545169." evidence="4">
    <original>E</original>
    <variation>D</variation>
    <location>
        <position position="313"/>
    </location>
</feature>
<feature type="sequence variant" id="VAR_067451" description="In dbSNP:rs17856236." evidence="5 9">
    <original>N</original>
    <variation>Y</variation>
    <location>
        <position position="724"/>
    </location>
</feature>
<feature type="sequence conflict" description="In Ref. 7; CAA60167." evidence="11" ref="7">
    <original>P</original>
    <variation>R</variation>
    <location>
        <position position="10"/>
    </location>
</feature>
<feature type="sequence conflict" description="In Ref. 6." evidence="11" ref="6">
    <original>P</original>
    <variation>S</variation>
    <location>
        <position position="21"/>
    </location>
</feature>
<feature type="sequence conflict" description="In Ref. 6." evidence="11" ref="6">
    <original>E</original>
    <variation>G</variation>
    <location>
        <position position="32"/>
    </location>
</feature>
<feature type="sequence conflict" description="In Ref. 6." evidence="11" ref="6">
    <original>Q</original>
    <variation>L</variation>
    <location>
        <position position="43"/>
    </location>
</feature>
<feature type="sequence conflict" description="In Ref. 6." evidence="11" ref="6">
    <original>E</original>
    <variation>V</variation>
    <location>
        <position position="57"/>
    </location>
</feature>
<feature type="sequence conflict" description="In Ref. 1; BAA11226." evidence="11" ref="1">
    <original>V</original>
    <variation>A</variation>
    <location>
        <position position="60"/>
    </location>
</feature>
<feature type="sequence conflict" description="In Ref. 6; AAA87705." evidence="11" ref="6">
    <original>Y</original>
    <variation>S</variation>
    <location>
        <position position="226"/>
    </location>
</feature>
<feature type="sequence conflict" description="In Ref. 7; CAA60167." evidence="11" ref="7">
    <original>S</original>
    <variation>T</variation>
    <location>
        <position position="260"/>
    </location>
</feature>
<feature type="sequence conflict" description="In Ref. 6; AAA87705." evidence="11" ref="6">
    <original>IFT</original>
    <variation>SS</variation>
    <location>
        <begin position="281"/>
        <end position="283"/>
    </location>
</feature>
<feature type="sequence conflict" description="In Ref. 1; BAA11226." evidence="11" ref="1">
    <original>G</original>
    <variation>A</variation>
    <location>
        <position position="415"/>
    </location>
</feature>
<feature type="sequence conflict" description="In Ref. 6." evidence="11" ref="6">
    <original>M</original>
    <variation>MGM</variation>
    <location>
        <position position="731"/>
    </location>
</feature>
<feature type="sequence conflict" description="In Ref. 3; BAG63219." evidence="11" ref="3">
    <original>L</original>
    <variation>P</variation>
    <location>
        <position position="776"/>
    </location>
</feature>
<feature type="sequence conflict" description="In Ref. 5 and 7." evidence="11" ref="5 7">
    <original>LRKNPNYDL</original>
    <variation>FGRTPIMISK</variation>
    <location>
        <begin position="900"/>
        <end position="908"/>
    </location>
</feature>
<feature type="helix" evidence="24">
    <location>
        <begin position="47"/>
        <end position="62"/>
    </location>
</feature>
<feature type="helix" evidence="24">
    <location>
        <begin position="68"/>
        <end position="86"/>
    </location>
</feature>
<feature type="strand" evidence="24">
    <location>
        <begin position="88"/>
        <end position="90"/>
    </location>
</feature>
<feature type="helix" evidence="24">
    <location>
        <begin position="94"/>
        <end position="98"/>
    </location>
</feature>
<feature type="helix" evidence="24">
    <location>
        <begin position="104"/>
        <end position="112"/>
    </location>
</feature>
<feature type="helix" evidence="24">
    <location>
        <begin position="117"/>
        <end position="132"/>
    </location>
</feature>
<feature type="helix" evidence="24">
    <location>
        <begin position="136"/>
        <end position="145"/>
    </location>
</feature>
<feature type="helix" evidence="24">
    <location>
        <begin position="151"/>
        <end position="153"/>
    </location>
</feature>
<feature type="helix" evidence="24">
    <location>
        <begin position="156"/>
        <end position="172"/>
    </location>
</feature>
<feature type="helix" evidence="24">
    <location>
        <begin position="181"/>
        <end position="197"/>
    </location>
</feature>
<feature type="helix" evidence="24">
    <location>
        <begin position="201"/>
        <end position="210"/>
    </location>
</feature>
<feature type="helix" evidence="24">
    <location>
        <begin position="217"/>
        <end position="220"/>
    </location>
</feature>
<feature type="turn" evidence="24">
    <location>
        <begin position="223"/>
        <end position="225"/>
    </location>
</feature>
<feature type="helix" evidence="24">
    <location>
        <begin position="226"/>
        <end position="239"/>
    </location>
</feature>
<feature type="helix" evidence="24">
    <location>
        <begin position="244"/>
        <end position="258"/>
    </location>
</feature>
<feature type="helix" evidence="23">
    <location>
        <begin position="262"/>
        <end position="272"/>
    </location>
</feature>
<feature type="helix" evidence="23">
    <location>
        <begin position="275"/>
        <end position="282"/>
    </location>
</feature>
<feature type="helix" evidence="23">
    <location>
        <begin position="288"/>
        <end position="301"/>
    </location>
</feature>
<feature type="helix" evidence="23">
    <location>
        <begin position="314"/>
        <end position="321"/>
    </location>
</feature>
<feature type="turn" evidence="23">
    <location>
        <begin position="322"/>
        <end position="325"/>
    </location>
</feature>
<feature type="helix" evidence="23">
    <location>
        <begin position="326"/>
        <end position="337"/>
    </location>
</feature>
<feature type="helix" evidence="23">
    <location>
        <begin position="345"/>
        <end position="348"/>
    </location>
</feature>
<feature type="turn" evidence="24">
    <location>
        <begin position="350"/>
        <end position="353"/>
    </location>
</feature>
<feature type="helix" evidence="23">
    <location>
        <begin position="368"/>
        <end position="381"/>
    </location>
</feature>
<feature type="turn" evidence="23">
    <location>
        <begin position="382"/>
        <end position="384"/>
    </location>
</feature>
<feature type="strand" evidence="23">
    <location>
        <begin position="389"/>
        <end position="391"/>
    </location>
</feature>
<feature type="helix" evidence="23">
    <location>
        <begin position="396"/>
        <end position="399"/>
    </location>
</feature>
<feature type="helix" evidence="23">
    <location>
        <begin position="405"/>
        <end position="417"/>
    </location>
</feature>
<feature type="turn" evidence="23">
    <location>
        <begin position="418"/>
        <end position="420"/>
    </location>
</feature>
<feature type="helix" evidence="23">
    <location>
        <begin position="422"/>
        <end position="429"/>
    </location>
</feature>
<feature type="helix" evidence="23">
    <location>
        <begin position="430"/>
        <end position="434"/>
    </location>
</feature>
<feature type="helix" evidence="23">
    <location>
        <begin position="438"/>
        <end position="450"/>
    </location>
</feature>
<feature type="turn" evidence="23">
    <location>
        <begin position="451"/>
        <end position="455"/>
    </location>
</feature>
<feature type="helix" evidence="23">
    <location>
        <begin position="461"/>
        <end position="466"/>
    </location>
</feature>
<feature type="helix" evidence="23">
    <location>
        <begin position="475"/>
        <end position="488"/>
    </location>
</feature>
<feature type="strand" evidence="22">
    <location>
        <begin position="490"/>
        <end position="492"/>
    </location>
</feature>
<feature type="helix" evidence="23">
    <location>
        <begin position="495"/>
        <end position="501"/>
    </location>
</feature>
<feature type="helix" evidence="23">
    <location>
        <begin position="502"/>
        <end position="505"/>
    </location>
</feature>
<feature type="helix" evidence="23">
    <location>
        <begin position="512"/>
        <end position="525"/>
    </location>
</feature>
<feature type="turn" evidence="23">
    <location>
        <begin position="526"/>
        <end position="528"/>
    </location>
</feature>
<feature type="helix" evidence="23">
    <location>
        <begin position="532"/>
        <end position="544"/>
    </location>
</feature>
<feature type="turn" evidence="23">
    <location>
        <begin position="547"/>
        <end position="551"/>
    </location>
</feature>
<feature type="helix" evidence="23">
    <location>
        <begin position="553"/>
        <end position="556"/>
    </location>
</feature>
<feature type="helix" evidence="23">
    <location>
        <begin position="557"/>
        <end position="565"/>
    </location>
</feature>
<feature type="turn" evidence="23">
    <location>
        <begin position="566"/>
        <end position="568"/>
    </location>
</feature>
<feature type="helix" evidence="23">
    <location>
        <begin position="570"/>
        <end position="573"/>
    </location>
</feature>
<feature type="helix" evidence="23">
    <location>
        <begin position="574"/>
        <end position="579"/>
    </location>
</feature>
<feature type="helix" evidence="23">
    <location>
        <begin position="580"/>
        <end position="582"/>
    </location>
</feature>
<feature type="helix" evidence="23">
    <location>
        <begin position="585"/>
        <end position="599"/>
    </location>
</feature>
<feature type="turn" evidence="23">
    <location>
        <begin position="600"/>
        <end position="603"/>
    </location>
</feature>
<feature type="helix" evidence="23">
    <location>
        <begin position="606"/>
        <end position="612"/>
    </location>
</feature>
<feature type="helix" evidence="23">
    <location>
        <begin position="650"/>
        <end position="661"/>
    </location>
</feature>
<feature type="helix" evidence="23">
    <location>
        <begin position="665"/>
        <end position="681"/>
    </location>
</feature>
<feature type="helix" evidence="23">
    <location>
        <begin position="686"/>
        <end position="689"/>
    </location>
</feature>
<feature type="helix" evidence="23">
    <location>
        <begin position="690"/>
        <end position="697"/>
    </location>
</feature>
<feature type="turn" evidence="23">
    <location>
        <begin position="698"/>
        <end position="700"/>
    </location>
</feature>
<feature type="helix" evidence="23">
    <location>
        <begin position="704"/>
        <end position="713"/>
    </location>
</feature>
<feature type="helix" evidence="23">
    <location>
        <begin position="719"/>
        <end position="732"/>
    </location>
</feature>
<feature type="turn" evidence="23">
    <location>
        <begin position="733"/>
        <end position="735"/>
    </location>
</feature>
<feature type="helix" evidence="23">
    <location>
        <begin position="739"/>
        <end position="751"/>
    </location>
</feature>
<feature type="turn" evidence="23">
    <location>
        <begin position="752"/>
        <end position="754"/>
    </location>
</feature>
<feature type="helix" evidence="23">
    <location>
        <begin position="756"/>
        <end position="769"/>
    </location>
</feature>
<feature type="helix" evidence="23">
    <location>
        <begin position="771"/>
        <end position="774"/>
    </location>
</feature>
<feature type="strand" evidence="23">
    <location>
        <begin position="780"/>
        <end position="782"/>
    </location>
</feature>
<feature type="turn" evidence="23">
    <location>
        <begin position="783"/>
        <end position="786"/>
    </location>
</feature>
<feature type="helix" evidence="23">
    <location>
        <begin position="790"/>
        <end position="803"/>
    </location>
</feature>
<feature type="turn" evidence="23">
    <location>
        <begin position="804"/>
        <end position="808"/>
    </location>
</feature>
<feature type="helix" evidence="23">
    <location>
        <begin position="809"/>
        <end position="813"/>
    </location>
</feature>
<feature type="helix" evidence="23">
    <location>
        <begin position="815"/>
        <end position="824"/>
    </location>
</feature>
<feature type="strand" evidence="23">
    <location>
        <begin position="829"/>
        <end position="833"/>
    </location>
</feature>
<feature type="strand" evidence="24">
    <location>
        <begin position="837"/>
        <end position="839"/>
    </location>
</feature>
<feature type="strand" evidence="23">
    <location>
        <begin position="843"/>
        <end position="847"/>
    </location>
</feature>
<feature type="strand" evidence="23">
    <location>
        <begin position="866"/>
        <end position="873"/>
    </location>
</feature>
<feature type="strand" evidence="23">
    <location>
        <begin position="879"/>
        <end position="884"/>
    </location>
</feature>
<feature type="strand" evidence="23">
    <location>
        <begin position="888"/>
        <end position="892"/>
    </location>
</feature>
<feature type="strand" evidence="23">
    <location>
        <begin position="895"/>
        <end position="901"/>
    </location>
</feature>
<reference key="1">
    <citation type="journal article" date="1996" name="Eur. J. Biochem.">
        <title>cDNA cloning and functional analysis of the p97 subunit of the 26S proteasome, a polypeptide identical to the type-1 tumor-necrosis-factor-receptor-associated protein-2/55.11.</title>
        <authorList>
            <person name="Tsurumi C."/>
            <person name="Shimizu Y."/>
            <person name="Saeki M."/>
            <person name="Kato S."/>
            <person name="DeMartino G.N."/>
            <person name="Slaughter C.A."/>
            <person name="Fujimuro M."/>
            <person name="Yokosawa H."/>
            <person name="Yamasaki M."/>
            <person name="Hendil K.B."/>
            <person name="Toh-e A."/>
            <person name="Tanahashi N."/>
            <person name="Tanaka K."/>
        </authorList>
    </citation>
    <scope>NUCLEOTIDE SEQUENCE [MRNA]</scope>
    <scope>PROTEIN SEQUENCE OF 49-66; 81-85; 91-117; 138-145; 148-158; 182-193; 209-229; 438-441 AND 471-481</scope>
    <source>
        <tissue>Fibrosarcoma</tissue>
    </source>
</reference>
<reference key="2">
    <citation type="submission" date="2003-08" db="EMBL/GenBank/DDBJ databases">
        <title>Cloning of human full-length CDSs in BD Creator(TM) system donor vector.</title>
        <authorList>
            <person name="Kalnine N."/>
            <person name="Chen X."/>
            <person name="Rolfs A."/>
            <person name="Halleck A."/>
            <person name="Hines L."/>
            <person name="Eisenstein S."/>
            <person name="Koundinya M."/>
            <person name="Raphael J."/>
            <person name="Moreira D."/>
            <person name="Kelley T."/>
            <person name="LaBaer J."/>
            <person name="Lin Y."/>
            <person name="Phelan M."/>
            <person name="Farmer A."/>
        </authorList>
    </citation>
    <scope>NUCLEOTIDE SEQUENCE [LARGE SCALE MRNA]</scope>
    <scope>VARIANT TYR-724</scope>
</reference>
<reference key="3">
    <citation type="journal article" date="2004" name="Nat. Genet.">
        <title>Complete sequencing and characterization of 21,243 full-length human cDNAs.</title>
        <authorList>
            <person name="Ota T."/>
            <person name="Suzuki Y."/>
            <person name="Nishikawa T."/>
            <person name="Otsuki T."/>
            <person name="Sugiyama T."/>
            <person name="Irie R."/>
            <person name="Wakamatsu A."/>
            <person name="Hayashi K."/>
            <person name="Sato H."/>
            <person name="Nagai K."/>
            <person name="Kimura K."/>
            <person name="Makita H."/>
            <person name="Sekine M."/>
            <person name="Obayashi M."/>
            <person name="Nishi T."/>
            <person name="Shibahara T."/>
            <person name="Tanaka T."/>
            <person name="Ishii S."/>
            <person name="Yamamoto J."/>
            <person name="Saito K."/>
            <person name="Kawai Y."/>
            <person name="Isono Y."/>
            <person name="Nakamura Y."/>
            <person name="Nagahari K."/>
            <person name="Murakami K."/>
            <person name="Yasuda T."/>
            <person name="Iwayanagi T."/>
            <person name="Wagatsuma M."/>
            <person name="Shiratori A."/>
            <person name="Sudo H."/>
            <person name="Hosoiri T."/>
            <person name="Kaku Y."/>
            <person name="Kodaira H."/>
            <person name="Kondo H."/>
            <person name="Sugawara M."/>
            <person name="Takahashi M."/>
            <person name="Kanda K."/>
            <person name="Yokoi T."/>
            <person name="Furuya T."/>
            <person name="Kikkawa E."/>
            <person name="Omura Y."/>
            <person name="Abe K."/>
            <person name="Kamihara K."/>
            <person name="Katsuta N."/>
            <person name="Sato K."/>
            <person name="Tanikawa M."/>
            <person name="Yamazaki M."/>
            <person name="Ninomiya K."/>
            <person name="Ishibashi T."/>
            <person name="Yamashita H."/>
            <person name="Murakawa K."/>
            <person name="Fujimori K."/>
            <person name="Tanai H."/>
            <person name="Kimata M."/>
            <person name="Watanabe M."/>
            <person name="Hiraoka S."/>
            <person name="Chiba Y."/>
            <person name="Ishida S."/>
            <person name="Ono Y."/>
            <person name="Takiguchi S."/>
            <person name="Watanabe S."/>
            <person name="Yosida M."/>
            <person name="Hotuta T."/>
            <person name="Kusano J."/>
            <person name="Kanehori K."/>
            <person name="Takahashi-Fujii A."/>
            <person name="Hara H."/>
            <person name="Tanase T.-O."/>
            <person name="Nomura Y."/>
            <person name="Togiya S."/>
            <person name="Komai F."/>
            <person name="Hara R."/>
            <person name="Takeuchi K."/>
            <person name="Arita M."/>
            <person name="Imose N."/>
            <person name="Musashino K."/>
            <person name="Yuuki H."/>
            <person name="Oshima A."/>
            <person name="Sasaki N."/>
            <person name="Aotsuka S."/>
            <person name="Yoshikawa Y."/>
            <person name="Matsunawa H."/>
            <person name="Ichihara T."/>
            <person name="Shiohata N."/>
            <person name="Sano S."/>
            <person name="Moriya S."/>
            <person name="Momiyama H."/>
            <person name="Satoh N."/>
            <person name="Takami S."/>
            <person name="Terashima Y."/>
            <person name="Suzuki O."/>
            <person name="Nakagawa S."/>
            <person name="Senoh A."/>
            <person name="Mizoguchi H."/>
            <person name="Goto Y."/>
            <person name="Shimizu F."/>
            <person name="Wakebe H."/>
            <person name="Hishigaki H."/>
            <person name="Watanabe T."/>
            <person name="Sugiyama A."/>
            <person name="Takemoto M."/>
            <person name="Kawakami B."/>
            <person name="Yamazaki M."/>
            <person name="Watanabe K."/>
            <person name="Kumagai A."/>
            <person name="Itakura S."/>
            <person name="Fukuzumi Y."/>
            <person name="Fujimori Y."/>
            <person name="Komiyama M."/>
            <person name="Tashiro H."/>
            <person name="Tanigami A."/>
            <person name="Fujiwara T."/>
            <person name="Ono T."/>
            <person name="Yamada K."/>
            <person name="Fujii Y."/>
            <person name="Ozaki K."/>
            <person name="Hirao M."/>
            <person name="Ohmori Y."/>
            <person name="Kawabata A."/>
            <person name="Hikiji T."/>
            <person name="Kobatake N."/>
            <person name="Inagaki H."/>
            <person name="Ikema Y."/>
            <person name="Okamoto S."/>
            <person name="Okitani R."/>
            <person name="Kawakami T."/>
            <person name="Noguchi S."/>
            <person name="Itoh T."/>
            <person name="Shigeta K."/>
            <person name="Senba T."/>
            <person name="Matsumura K."/>
            <person name="Nakajima Y."/>
            <person name="Mizuno T."/>
            <person name="Morinaga M."/>
            <person name="Sasaki M."/>
            <person name="Togashi T."/>
            <person name="Oyama M."/>
            <person name="Hata H."/>
            <person name="Watanabe M."/>
            <person name="Komatsu T."/>
            <person name="Mizushima-Sugano J."/>
            <person name="Satoh T."/>
            <person name="Shirai Y."/>
            <person name="Takahashi Y."/>
            <person name="Nakagawa K."/>
            <person name="Okumura K."/>
            <person name="Nagase T."/>
            <person name="Nomura N."/>
            <person name="Kikuchi H."/>
            <person name="Masuho Y."/>
            <person name="Yamashita R."/>
            <person name="Nakai K."/>
            <person name="Yada T."/>
            <person name="Nakamura Y."/>
            <person name="Ohara O."/>
            <person name="Isogai T."/>
            <person name="Sugano S."/>
        </authorList>
    </citation>
    <scope>NUCLEOTIDE SEQUENCE [LARGE SCALE MRNA] (ISOFORMS 2 AND 3)</scope>
    <scope>VARIANT ASP-313</scope>
    <source>
        <tissue>Testis</tissue>
    </source>
</reference>
<reference key="4">
    <citation type="journal article" date="2006" name="Nature">
        <title>The DNA sequence, annotation and analysis of human chromosome 3.</title>
        <authorList>
            <person name="Muzny D.M."/>
            <person name="Scherer S.E."/>
            <person name="Kaul R."/>
            <person name="Wang J."/>
            <person name="Yu J."/>
            <person name="Sudbrak R."/>
            <person name="Buhay C.J."/>
            <person name="Chen R."/>
            <person name="Cree A."/>
            <person name="Ding Y."/>
            <person name="Dugan-Rocha S."/>
            <person name="Gill R."/>
            <person name="Gunaratne P."/>
            <person name="Harris R.A."/>
            <person name="Hawes A.C."/>
            <person name="Hernandez J."/>
            <person name="Hodgson A.V."/>
            <person name="Hume J."/>
            <person name="Jackson A."/>
            <person name="Khan Z.M."/>
            <person name="Kovar-Smith C."/>
            <person name="Lewis L.R."/>
            <person name="Lozado R.J."/>
            <person name="Metzker M.L."/>
            <person name="Milosavljevic A."/>
            <person name="Miner G.R."/>
            <person name="Morgan M.B."/>
            <person name="Nazareth L.V."/>
            <person name="Scott G."/>
            <person name="Sodergren E."/>
            <person name="Song X.-Z."/>
            <person name="Steffen D."/>
            <person name="Wei S."/>
            <person name="Wheeler D.A."/>
            <person name="Wright M.W."/>
            <person name="Worley K.C."/>
            <person name="Yuan Y."/>
            <person name="Zhang Z."/>
            <person name="Adams C.Q."/>
            <person name="Ansari-Lari M.A."/>
            <person name="Ayele M."/>
            <person name="Brown M.J."/>
            <person name="Chen G."/>
            <person name="Chen Z."/>
            <person name="Clendenning J."/>
            <person name="Clerc-Blankenburg K.P."/>
            <person name="Chen R."/>
            <person name="Chen Z."/>
            <person name="Davis C."/>
            <person name="Delgado O."/>
            <person name="Dinh H.H."/>
            <person name="Dong W."/>
            <person name="Draper H."/>
            <person name="Ernst S."/>
            <person name="Fu G."/>
            <person name="Gonzalez-Garay M.L."/>
            <person name="Garcia D.K."/>
            <person name="Gillett W."/>
            <person name="Gu J."/>
            <person name="Hao B."/>
            <person name="Haugen E."/>
            <person name="Havlak P."/>
            <person name="He X."/>
            <person name="Hennig S."/>
            <person name="Hu S."/>
            <person name="Huang W."/>
            <person name="Jackson L.R."/>
            <person name="Jacob L.S."/>
            <person name="Kelly S.H."/>
            <person name="Kube M."/>
            <person name="Levy R."/>
            <person name="Li Z."/>
            <person name="Liu B."/>
            <person name="Liu J."/>
            <person name="Liu W."/>
            <person name="Lu J."/>
            <person name="Maheshwari M."/>
            <person name="Nguyen B.-V."/>
            <person name="Okwuonu G.O."/>
            <person name="Palmeiri A."/>
            <person name="Pasternak S."/>
            <person name="Perez L.M."/>
            <person name="Phelps K.A."/>
            <person name="Plopper F.J."/>
            <person name="Qiang B."/>
            <person name="Raymond C."/>
            <person name="Rodriguez R."/>
            <person name="Saenphimmachak C."/>
            <person name="Santibanez J."/>
            <person name="Shen H."/>
            <person name="Shen Y."/>
            <person name="Subramanian S."/>
            <person name="Tabor P.E."/>
            <person name="Verduzco D."/>
            <person name="Waldron L."/>
            <person name="Wang J."/>
            <person name="Wang J."/>
            <person name="Wang Q."/>
            <person name="Williams G.A."/>
            <person name="Wong G.K.-S."/>
            <person name="Yao Z."/>
            <person name="Zhang J."/>
            <person name="Zhang X."/>
            <person name="Zhao G."/>
            <person name="Zhou J."/>
            <person name="Zhou Y."/>
            <person name="Nelson D."/>
            <person name="Lehrach H."/>
            <person name="Reinhardt R."/>
            <person name="Naylor S.L."/>
            <person name="Yang H."/>
            <person name="Olson M."/>
            <person name="Weinstock G."/>
            <person name="Gibbs R.A."/>
        </authorList>
    </citation>
    <scope>NUCLEOTIDE SEQUENCE [LARGE SCALE GENOMIC DNA]</scope>
</reference>
<reference key="5">
    <citation type="journal article" date="2004" name="Genome Res.">
        <title>The status, quality, and expansion of the NIH full-length cDNA project: the Mammalian Gene Collection (MGC).</title>
        <authorList>
            <consortium name="The MGC Project Team"/>
        </authorList>
    </citation>
    <scope>NUCLEOTIDE SEQUENCE [LARGE SCALE MRNA]</scope>
    <scope>VARIANT TYR-724</scope>
    <source>
        <tissue>Lung</tissue>
        <tissue>Muscle</tissue>
        <tissue>Skin</tissue>
    </source>
</reference>
<reference key="6">
    <citation type="journal article" date="1997" name="J. Immunol.">
        <title>Two-hybrid cloning of a gene encoding TNF receptor-associated protein 2, a protein that interacts with the intracellular domain of the type 1 TNF receptor: identity with subunit 2 of the 26S protease.</title>
        <authorList>
            <person name="Dunbar J.D."/>
            <person name="Song H.Y."/>
            <person name="Guo D."/>
            <person name="Wu L.-W."/>
            <person name="Donner D.B."/>
        </authorList>
    </citation>
    <scope>NUCLEOTIDE SEQUENCE [MRNA] OF 21-908</scope>
</reference>
<reference key="7">
    <citation type="journal article" date="1995" name="FEBS Lett.">
        <title>A protein related to a proteasomal subunit binds to the intracellular domain of the p55 TNF receptor upstream to its 'death domain'.</title>
        <authorList>
            <person name="Boldin M.P."/>
            <person name="Mett I.L."/>
            <person name="Wallach D."/>
        </authorList>
    </citation>
    <scope>NUCLEOTIDE SEQUENCE [MRNA] OF 10-908</scope>
    <source>
        <tissue>Liver</tissue>
    </source>
</reference>
<reference key="8">
    <citation type="journal article" date="1992" name="Eur. J. Biochem.">
        <title>Demonstration that a human 26S proteolytic complex consists of a proteasome and multiple associated protein components and hydrolyzes ATP and ubiquitin-ligated proteins by closely linked mechanisms.</title>
        <authorList>
            <person name="Kanayama H.O."/>
            <person name="Tamura T."/>
            <person name="Ugai S."/>
            <person name="Kagawa S."/>
            <person name="Tanahashi N."/>
            <person name="Yoshimura T."/>
            <person name="Tanaka K."/>
            <person name="Ichihara A."/>
        </authorList>
    </citation>
    <scope>FUNCTION</scope>
</reference>
<reference key="9">
    <citation type="journal article" date="2003" name="Nature">
        <title>Proteomic characterization of the human centrosome by protein correlation profiling.</title>
        <authorList>
            <person name="Andersen J.S."/>
            <person name="Wilkinson C.J."/>
            <person name="Mayor T."/>
            <person name="Mortensen P."/>
            <person name="Nigg E.A."/>
            <person name="Mann M."/>
        </authorList>
    </citation>
    <scope>IDENTIFICATION BY MASS SPECTROMETRY</scope>
    <source>
        <tissue>Lymphoblast</tissue>
    </source>
</reference>
<reference key="10">
    <citation type="journal article" date="2006" name="Cell">
        <title>Global, in vivo, and site-specific phosphorylation dynamics in signaling networks.</title>
        <authorList>
            <person name="Olsen J.V."/>
            <person name="Blagoev B."/>
            <person name="Gnad F."/>
            <person name="Macek B."/>
            <person name="Kumar C."/>
            <person name="Mortensen P."/>
            <person name="Mann M."/>
        </authorList>
    </citation>
    <scope>PHOSPHORYLATION [LARGE SCALE ANALYSIS] AT SER-16</scope>
    <scope>IDENTIFICATION BY MASS SPECTROMETRY [LARGE SCALE ANALYSIS]</scope>
    <source>
        <tissue>Cervix carcinoma</tissue>
    </source>
</reference>
<reference key="11">
    <citation type="journal article" date="2007" name="Biochemistry">
        <title>Mass spectrometric characterization of the affinity-purified human 26S proteasome complex.</title>
        <authorList>
            <person name="Wang X."/>
            <person name="Chen C.-F."/>
            <person name="Baker P.R."/>
            <person name="Chen P.-L."/>
            <person name="Kaiser P."/>
            <person name="Huang L."/>
        </authorList>
    </citation>
    <scope>PHOSPHORYLATION [LARGE SCALE ANALYSIS] AT SER-16; THR-24; SER-29 AND TYR-194</scope>
    <scope>IDENTIFICATION BY MASS SPECTROMETRY [LARGE SCALE ANALYSIS]</scope>
    <source>
        <tissue>Embryonic kidney</tissue>
    </source>
</reference>
<reference key="12">
    <citation type="journal article" date="2007" name="J. Proteome Res.">
        <title>Improved titanium dioxide enrichment of phosphopeptides from HeLa cells and high confident phosphopeptide identification by cross-validation of MS/MS and MS/MS/MS spectra.</title>
        <authorList>
            <person name="Yu L.R."/>
            <person name="Zhu Z."/>
            <person name="Chan K.C."/>
            <person name="Issaq H.J."/>
            <person name="Dimitrov D.S."/>
            <person name="Veenstra T.D."/>
        </authorList>
    </citation>
    <scope>PHOSPHORYLATION [LARGE SCALE ANALYSIS] AT SER-16</scope>
    <scope>IDENTIFICATION BY MASS SPECTROMETRY [LARGE SCALE ANALYSIS]</scope>
    <source>
        <tissue>Cervix carcinoma</tissue>
    </source>
</reference>
<reference key="13">
    <citation type="journal article" date="2008" name="Mol. Cell">
        <title>Kinase-selective enrichment enables quantitative phosphoproteomics of the kinome across the cell cycle.</title>
        <authorList>
            <person name="Daub H."/>
            <person name="Olsen J.V."/>
            <person name="Bairlein M."/>
            <person name="Gnad F."/>
            <person name="Oppermann F.S."/>
            <person name="Korner R."/>
            <person name="Greff Z."/>
            <person name="Keri G."/>
            <person name="Stemmann O."/>
            <person name="Mann M."/>
        </authorList>
    </citation>
    <scope>PHOSPHORYLATION [LARGE SCALE ANALYSIS] AT SER-16</scope>
    <scope>IDENTIFICATION BY MASS SPECTROMETRY [LARGE SCALE ANALYSIS]</scope>
    <source>
        <tissue>Cervix carcinoma</tissue>
    </source>
</reference>
<reference key="14">
    <citation type="journal article" date="2008" name="Proc. Natl. Acad. Sci. U.S.A.">
        <title>A quantitative atlas of mitotic phosphorylation.</title>
        <authorList>
            <person name="Dephoure N."/>
            <person name="Zhou C."/>
            <person name="Villen J."/>
            <person name="Beausoleil S.A."/>
            <person name="Bakalarski C.E."/>
            <person name="Elledge S.J."/>
            <person name="Gygi S.P."/>
        </authorList>
    </citation>
    <scope>PHOSPHORYLATION [LARGE SCALE ANALYSIS] AT SER-16</scope>
    <scope>IDENTIFICATION BY MASS SPECTROMETRY [LARGE SCALE ANALYSIS]</scope>
    <source>
        <tissue>Cervix carcinoma</tissue>
    </source>
</reference>
<reference key="15">
    <citation type="journal article" date="2009" name="Anal. Chem.">
        <title>Lys-N and trypsin cover complementary parts of the phosphoproteome in a refined SCX-based approach.</title>
        <authorList>
            <person name="Gauci S."/>
            <person name="Helbig A.O."/>
            <person name="Slijper M."/>
            <person name="Krijgsveld J."/>
            <person name="Heck A.J."/>
            <person name="Mohammed S."/>
        </authorList>
    </citation>
    <scope>IDENTIFICATION BY MASS SPECTROMETRY [LARGE SCALE ANALYSIS]</scope>
</reference>
<reference key="16">
    <citation type="journal article" date="2009" name="Sci. Signal.">
        <title>Quantitative phosphoproteomic analysis of T cell receptor signaling reveals system-wide modulation of protein-protein interactions.</title>
        <authorList>
            <person name="Mayya V."/>
            <person name="Lundgren D.H."/>
            <person name="Hwang S.-I."/>
            <person name="Rezaul K."/>
            <person name="Wu L."/>
            <person name="Eng J.K."/>
            <person name="Rodionov V."/>
            <person name="Han D.K."/>
        </authorList>
    </citation>
    <scope>PHOSPHORYLATION [LARGE SCALE ANALYSIS] AT SER-16 AND SER-361</scope>
    <scope>IDENTIFICATION BY MASS SPECTROMETRY [LARGE SCALE ANALYSIS]</scope>
    <source>
        <tissue>Leukemic T-cell</tissue>
    </source>
</reference>
<reference key="17">
    <citation type="journal article" date="2010" name="Sci. Signal.">
        <title>Quantitative phosphoproteomics reveals widespread full phosphorylation site occupancy during mitosis.</title>
        <authorList>
            <person name="Olsen J.V."/>
            <person name="Vermeulen M."/>
            <person name="Santamaria A."/>
            <person name="Kumar C."/>
            <person name="Miller M.L."/>
            <person name="Jensen L.J."/>
            <person name="Gnad F."/>
            <person name="Cox J."/>
            <person name="Jensen T.S."/>
            <person name="Nigg E.A."/>
            <person name="Brunak S."/>
            <person name="Mann M."/>
        </authorList>
    </citation>
    <scope>PHOSPHORYLATION [LARGE SCALE ANALYSIS] AT SER-16; THR-24 AND SER-361</scope>
    <scope>IDENTIFICATION BY MASS SPECTROMETRY [LARGE SCALE ANALYSIS]</scope>
    <source>
        <tissue>Cervix carcinoma</tissue>
    </source>
</reference>
<reference key="18">
    <citation type="journal article" date="2011" name="BMC Syst. Biol.">
        <title>Initial characterization of the human central proteome.</title>
        <authorList>
            <person name="Burkard T.R."/>
            <person name="Planyavsky M."/>
            <person name="Kaupe I."/>
            <person name="Breitwieser F.P."/>
            <person name="Buerckstuemmer T."/>
            <person name="Bennett K.L."/>
            <person name="Superti-Furga G."/>
            <person name="Colinge J."/>
        </authorList>
    </citation>
    <scope>IDENTIFICATION BY MASS SPECTROMETRY [LARGE SCALE ANALYSIS]</scope>
</reference>
<reference key="19">
    <citation type="journal article" date="2011" name="Sci. Signal.">
        <title>System-wide temporal characterization of the proteome and phosphoproteome of human embryonic stem cell differentiation.</title>
        <authorList>
            <person name="Rigbolt K.T."/>
            <person name="Prokhorova T.A."/>
            <person name="Akimov V."/>
            <person name="Henningsen J."/>
            <person name="Johansen P.T."/>
            <person name="Kratchmarova I."/>
            <person name="Kassem M."/>
            <person name="Mann M."/>
            <person name="Olsen J.V."/>
            <person name="Blagoev B."/>
        </authorList>
    </citation>
    <scope>PHOSPHORYLATION [LARGE SCALE ANALYSIS] AT SER-16 AND SER-361</scope>
    <scope>IDENTIFICATION BY MASS SPECTROMETRY [LARGE SCALE ANALYSIS]</scope>
</reference>
<reference key="20">
    <citation type="journal article" date="2013" name="J. Proteome Res.">
        <title>Toward a comprehensive characterization of a human cancer cell phosphoproteome.</title>
        <authorList>
            <person name="Zhou H."/>
            <person name="Di Palma S."/>
            <person name="Preisinger C."/>
            <person name="Peng M."/>
            <person name="Polat A.N."/>
            <person name="Heck A.J."/>
            <person name="Mohammed S."/>
        </authorList>
    </citation>
    <scope>PHOSPHORYLATION [LARGE SCALE ANALYSIS] AT SER-16; SER-147 AND SER-361</scope>
    <scope>IDENTIFICATION BY MASS SPECTROMETRY [LARGE SCALE ANALYSIS]</scope>
    <source>
        <tissue>Cervix carcinoma</tissue>
        <tissue>Erythroleukemia</tissue>
    </source>
</reference>
<reference key="21">
    <citation type="journal article" date="2014" name="J. Proteomics">
        <title>An enzyme assisted RP-RPLC approach for in-depth analysis of human liver phosphoproteome.</title>
        <authorList>
            <person name="Bian Y."/>
            <person name="Song C."/>
            <person name="Cheng K."/>
            <person name="Dong M."/>
            <person name="Wang F."/>
            <person name="Huang J."/>
            <person name="Sun D."/>
            <person name="Wang L."/>
            <person name="Ye M."/>
            <person name="Zou H."/>
        </authorList>
    </citation>
    <scope>PHOSPHORYLATION [LARGE SCALE ANALYSIS] AT SER-16; SER-361 AND SER-363</scope>
    <scope>IDENTIFICATION BY MASS SPECTROMETRY [LARGE SCALE ANALYSIS]</scope>
    <source>
        <tissue>Liver</tissue>
    </source>
</reference>
<reference key="22">
    <citation type="journal article" date="2015" name="Proteomics">
        <title>N-terminome analysis of the human mitochondrial proteome.</title>
        <authorList>
            <person name="Vaca Jacome A.S."/>
            <person name="Rabilloud T."/>
            <person name="Schaeffer-Reiss C."/>
            <person name="Rompais M."/>
            <person name="Ayoub D."/>
            <person name="Lane L."/>
            <person name="Bairoch A."/>
            <person name="Van Dorsselaer A."/>
            <person name="Carapito C."/>
        </authorList>
    </citation>
    <scope>IDENTIFICATION BY MASS SPECTROMETRY [LARGE SCALE ANALYSIS]</scope>
</reference>
<reference key="23">
    <citation type="journal article" date="2017" name="Open Biol.">
        <title>Phosphatase UBLCP1 controls proteasome assembly.</title>
        <authorList>
            <person name="Sun S."/>
            <person name="Liu S."/>
            <person name="Zhang Z."/>
            <person name="Zeng W."/>
            <person name="Sun C."/>
            <person name="Tao T."/>
            <person name="Lin X."/>
            <person name="Feng X.H."/>
        </authorList>
    </citation>
    <scope>INTERACTION WITH UBLCP1</scope>
</reference>
<reference key="24">
    <citation type="journal article" date="2016" name="Nat. Struct. Mol. Biol.">
        <title>An atomic structure of the human 26S proteasome.</title>
        <authorList>
            <person name="Huang X."/>
            <person name="Luan B."/>
            <person name="Wu J."/>
            <person name="Shi Y."/>
        </authorList>
    </citation>
    <scope>STRUCTURE BY ELECTRON MICROSCOPY (3.50 ANGSTROMS)</scope>
    <scope>SUBUNIT</scope>
</reference>
<reference key="25">
    <citation type="journal article" date="2016" name="Proc. Natl. Acad. Sci. U.S.A.">
        <title>Structure of the human 26S proteasome at a resolution of 3.9 Aa.</title>
        <authorList>
            <person name="Schweitzer A."/>
            <person name="Aufderheide A."/>
            <person name="Rudack T."/>
            <person name="Beck F."/>
            <person name="Pfeifer G."/>
            <person name="Plitzko J.M."/>
            <person name="Sakata E."/>
            <person name="Schulten K."/>
            <person name="Foerster F."/>
            <person name="Baumeister W."/>
        </authorList>
    </citation>
    <scope>STRUCTURE BY ELECTRON MICROSCOPY (4.50 ANGSTROMS)</scope>
    <scope>SUBUNIT</scope>
</reference>
<proteinExistence type="evidence at protein level"/>
<protein>
    <recommendedName>
        <fullName>26S proteasome non-ATPase regulatory subunit 2</fullName>
    </recommendedName>
    <alternativeName>
        <fullName>26S proteasome regulatory subunit RPN1</fullName>
    </alternativeName>
    <alternativeName>
        <fullName>26S proteasome regulatory subunit S2</fullName>
    </alternativeName>
    <alternativeName>
        <fullName>26S proteasome subunit p97</fullName>
    </alternativeName>
    <alternativeName>
        <fullName>Protein 55.11</fullName>
    </alternativeName>
    <alternativeName>
        <fullName>Tumor necrosis factor type 1 receptor-associated protein 2</fullName>
    </alternativeName>
</protein>
<gene>
    <name type="primary">PSMD2</name>
    <name type="synonym">TRAP2</name>
</gene>
<keyword id="KW-0002">3D-structure</keyword>
<keyword id="KW-0007">Acetylation</keyword>
<keyword id="KW-0025">Alternative splicing</keyword>
<keyword id="KW-0903">Direct protein sequencing</keyword>
<keyword id="KW-0597">Phosphoprotein</keyword>
<keyword id="KW-0647">Proteasome</keyword>
<keyword id="KW-1267">Proteomics identification</keyword>
<keyword id="KW-1185">Reference proteome</keyword>
<keyword id="KW-0677">Repeat</keyword>
<comment type="function">
    <text evidence="3">Component of the 26S proteasome, a multiprotein complex involved in the ATP-dependent degradation of ubiquitinated proteins. This complex plays a key role in the maintenance of protein homeostasis by removing misfolded or damaged proteins, which could impair cellular functions, and by removing proteins whose functions are no longer required. Therefore, the proteasome participates in numerous cellular processes, including cell cycle progression, apoptosis, or DNA damage repair.</text>
</comment>
<comment type="function">
    <text>Binds to the intracellular domain of tumor necrosis factor type 1 receptor. The binding domain of TRAP1 and TRAP2 resides outside the death domain of TNFR1.</text>
</comment>
<comment type="subunit">
    <text evidence="1 6 7 8">Component of the 19S proteasome regulatory particle complex. The 26S proteasome consists of a 20S core particle (CP) and two 19S regulatory subunits (RP). The regulatory particle is made of a lid composed of 9 subunits, a base containing 6 ATPases and few additional components including PSMD2 (PubMed:27342858, PubMed:27428775). Interacts with RPGRIP1L (By similarity). Interacts with CRY1 in a KDM8-dependent manner (By similarity). Interacts (via C-terminus) with phosphatase UBLCP1 (via ubiquitin-like domain); the interaction recruits UBLCP1 to the 19S regulatory particle where it dephosphorylates 19S subunit PSMC2/RPT1 which impairs PSMC2 ATPase activity and disrupts 26S proteasome assembly (PubMed:28539385).</text>
</comment>
<comment type="interaction">
    <interactant intactId="EBI-357648">
        <id>Q13200</id>
    </interactant>
    <interactant intactId="EBI-954387">
        <id>Q16186</id>
        <label>ADRM1</label>
    </interactant>
    <organismsDiffer>false</organismsDiffer>
    <experiments>5</experiments>
</comment>
<comment type="interaction">
    <interactant intactId="EBI-357648">
        <id>Q13200</id>
    </interactant>
    <interactant intactId="EBI-1030678">
        <id>Q99933</id>
        <label>BAG1</label>
    </interactant>
    <organismsDiffer>false</organismsDiffer>
    <experiments>9</experiments>
</comment>
<comment type="interaction">
    <interactant intactId="EBI-357648">
        <id>Q13200</id>
    </interactant>
    <interactant intactId="EBI-1049597">
        <id>P27797</id>
        <label>CALR</label>
    </interactant>
    <organismsDiffer>false</organismsDiffer>
    <experiments>3</experiments>
</comment>
<comment type="interaction">
    <interactant intactId="EBI-357648">
        <id>Q13200</id>
    </interactant>
    <interactant intactId="EBI-351007">
        <id>P36957</id>
        <label>DLST</label>
    </interactant>
    <organismsDiffer>false</organismsDiffer>
    <experiments>3</experiments>
</comment>
<comment type="interaction">
    <interactant intactId="EBI-357648">
        <id>Q13200</id>
    </interactant>
    <interactant intactId="EBI-739467">
        <id>Q9H8Y8</id>
        <label>GORASP2</label>
    </interactant>
    <organismsDiffer>false</organismsDiffer>
    <experiments>3</experiments>
</comment>
<comment type="interaction">
    <interactant intactId="EBI-357648">
        <id>Q13200</id>
    </interactant>
    <interactant intactId="EBI-721328">
        <id>P58340</id>
        <label>MLF1</label>
    </interactant>
    <organismsDiffer>false</organismsDiffer>
    <experiments>2</experiments>
</comment>
<comment type="interaction">
    <interactant intactId="EBI-357648">
        <id>Q13200</id>
    </interactant>
    <interactant intactId="EBI-1055945">
        <id>Q8TDX7</id>
        <label>NEK7</label>
    </interactant>
    <organismsDiffer>false</organismsDiffer>
    <experiments>3</experiments>
</comment>
<comment type="interaction">
    <interactant intactId="EBI-357648">
        <id>Q13200</id>
    </interactant>
    <interactant intactId="EBI-476586">
        <id>P17612</id>
        <label>PRKACA</label>
    </interactant>
    <organismsDiffer>false</organismsDiffer>
    <experiments>3</experiments>
</comment>
<comment type="interaction">
    <interactant intactId="EBI-357648">
        <id>Q13200</id>
    </interactant>
    <interactant intactId="EBI-357598">
        <id>P62191</id>
        <label>PSMC1</label>
    </interactant>
    <organismsDiffer>false</organismsDiffer>
    <experiments>19</experiments>
</comment>
<comment type="interaction">
    <interactant intactId="EBI-357648">
        <id>Q13200</id>
    </interactant>
    <interactant intactId="EBI-10242995">
        <id>Q53XL8</id>
        <label>PSMC1</label>
    </interactant>
    <organismsDiffer>false</organismsDiffer>
    <experiments>3</experiments>
</comment>
<comment type="interaction">
    <interactant intactId="EBI-357648">
        <id>Q13200</id>
    </interactant>
    <interactant intactId="EBI-359710">
        <id>P35998</id>
        <label>PSMC2</label>
    </interactant>
    <organismsDiffer>false</organismsDiffer>
    <experiments>8</experiments>
</comment>
<comment type="interaction">
    <interactant intactId="EBI-357648">
        <id>Q13200</id>
    </interactant>
    <interactant intactId="EBI-357745">
        <id>P62195</id>
        <label>PSMC5</label>
    </interactant>
    <organismsDiffer>false</organismsDiffer>
    <experiments>14</experiments>
</comment>
<comment type="interaction">
    <interactant intactId="EBI-357648">
        <id>Q13200</id>
    </interactant>
    <interactant intactId="EBI-357622">
        <id>O43242</id>
        <label>PSMD3</label>
    </interactant>
    <organismsDiffer>false</organismsDiffer>
    <experiments>4</experiments>
</comment>
<comment type="interaction">
    <interactant intactId="EBI-357648">
        <id>Q13200</id>
    </interactant>
    <interactant intactId="EBI-359318">
        <id>P55036</id>
        <label>PSMD4</label>
    </interactant>
    <organismsDiffer>false</organismsDiffer>
    <experiments>7</experiments>
</comment>
<comment type="interaction">
    <interactant intactId="EBI-357648">
        <id>Q13200</id>
    </interactant>
    <interactant intactId="EBI-746453">
        <id>P54725</id>
        <label>RAD23A</label>
    </interactant>
    <organismsDiffer>false</organismsDiffer>
    <experiments>3</experiments>
</comment>
<comment type="interaction">
    <interactant intactId="EBI-357648">
        <id>Q13200</id>
    </interactant>
    <interactant intactId="EBI-350723">
        <id>P50454</id>
        <label>SERPINH1</label>
    </interactant>
    <organismsDiffer>false</organismsDiffer>
    <experiments>4</experiments>
</comment>
<comment type="interaction">
    <interactant intactId="EBI-357648">
        <id>Q13200</id>
    </interactant>
    <interactant intactId="EBI-372899">
        <id>Q13148</id>
        <label>TARDBP</label>
    </interactant>
    <organismsDiffer>false</organismsDiffer>
    <experiments>3</experiments>
</comment>
<comment type="interaction">
    <interactant intactId="EBI-357648">
        <id>Q13200</id>
    </interactant>
    <interactant intactId="EBI-13092532">
        <id>Q6DHY5</id>
        <label>TBC1D3G</label>
    </interactant>
    <organismsDiffer>false</organismsDiffer>
    <experiments>3</experiments>
</comment>
<comment type="interaction">
    <interactant intactId="EBI-357648">
        <id>Q13200</id>
    </interactant>
    <interactant intactId="EBI-296151">
        <id>P37173</id>
        <label>TGFBR2</label>
    </interactant>
    <organismsDiffer>false</organismsDiffer>
    <experiments>3</experiments>
</comment>
<comment type="interaction">
    <interactant intactId="EBI-357648">
        <id>Q13200</id>
    </interactant>
    <interactant intactId="EBI-750011">
        <id>Q8WVY7</id>
        <label>UBLCP1</label>
    </interactant>
    <organismsDiffer>false</organismsDiffer>
    <experiments>14</experiments>
</comment>
<comment type="interaction">
    <interactant intactId="EBI-357648">
        <id>Q13200</id>
    </interactant>
    <interactant intactId="EBI-947187">
        <id>Q9UHD9</id>
        <label>UBQLN2</label>
    </interactant>
    <organismsDiffer>false</organismsDiffer>
    <experiments>3</experiments>
</comment>
<comment type="interaction">
    <interactant intactId="EBI-357648">
        <id>Q13200</id>
    </interactant>
    <interactant intactId="EBI-1051183">
        <id>Q9Y5K5</id>
        <label>UCHL5</label>
    </interactant>
    <organismsDiffer>false</organismsDiffer>
    <experiments>7</experiments>
</comment>
<comment type="interaction">
    <interactant intactId="EBI-357648">
        <id>Q13200</id>
    </interactant>
    <interactant intactId="EBI-9031083">
        <id>Q9Y2B5</id>
        <label>VPS9D1</label>
    </interactant>
    <organismsDiffer>false</organismsDiffer>
    <experiments>3</experiments>
</comment>
<comment type="interaction">
    <interactant intactId="EBI-357648">
        <id>Q13200</id>
    </interactant>
    <interactant intactId="EBI-9995672">
        <id>O15060</id>
        <label>ZBTB39</label>
    </interactant>
    <organismsDiffer>false</organismsDiffer>
    <experiments>3</experiments>
</comment>
<comment type="interaction">
    <interactant intactId="EBI-357648">
        <id>Q13200</id>
    </interactant>
    <interactant intactId="EBI-9362707">
        <id>Q53HB3</id>
    </interactant>
    <organismsDiffer>false</organismsDiffer>
    <experiments>2</experiments>
</comment>
<comment type="interaction">
    <interactant intactId="EBI-357648">
        <id>Q13200</id>
    </interactant>
    <interactant intactId="EBI-1185167">
        <id>Q8AZK7</id>
        <label>EBNA-LP</label>
    </interactant>
    <organismsDiffer>true</organismsDiffer>
    <experiments>2</experiments>
</comment>
<comment type="interaction">
    <interactant intactId="EBI-357648">
        <id>Q13200</id>
    </interactant>
    <interactant intactId="EBI-8329978">
        <id>Q8K2C9</id>
        <label>Hacd3</label>
    </interactant>
    <organismsDiffer>true</organismsDiffer>
    <experiments>2</experiments>
</comment>
<comment type="alternative products">
    <event type="alternative splicing"/>
    <isoform>
        <id>Q13200-1</id>
        <name>1</name>
        <sequence type="displayed"/>
    </isoform>
    <isoform>
        <id>Q13200-2</id>
        <name>2</name>
        <sequence type="described" ref="VSP_055065"/>
    </isoform>
    <isoform>
        <id>Q13200-3</id>
        <name>3</name>
        <sequence type="described" ref="VSP_055066"/>
    </isoform>
</comment>
<comment type="tissue specificity">
    <text>Found in skeletal muscle, liver, heart, brain, kidney, pancreas, lung and placenta.</text>
</comment>
<comment type="similarity">
    <text evidence="11">Belongs to the proteasome subunit S2 family.</text>
</comment>
<comment type="sequence caution" evidence="11">
    <conflict type="erroneous initiation">
        <sequence resource="EMBL-CDS" id="AAA87705"/>
    </conflict>
</comment>